<accession>P11021</accession>
<accession>B0QZ61</accession>
<accession>Q2EF78</accession>
<accession>Q9NPF1</accession>
<accession>Q9UK02</accession>
<proteinExistence type="evidence at protein level"/>
<keyword id="KW-0002">3D-structure</keyword>
<keyword id="KW-0007">Acetylation</keyword>
<keyword id="KW-0067">ATP-binding</keyword>
<keyword id="KW-0143">Chaperone</keyword>
<keyword id="KW-0963">Cytoplasm</keyword>
<keyword id="KW-0903">Direct protein sequencing</keyword>
<keyword id="KW-0256">Endoplasmic reticulum</keyword>
<keyword id="KW-0945">Host-virus interaction</keyword>
<keyword id="KW-0378">Hydrolase</keyword>
<keyword id="KW-1017">Isopeptide bond</keyword>
<keyword id="KW-0488">Methylation</keyword>
<keyword id="KW-0944">Nitration</keyword>
<keyword id="KW-0547">Nucleotide-binding</keyword>
<keyword id="KW-0597">Phosphoprotein</keyword>
<keyword id="KW-1267">Proteomics identification</keyword>
<keyword id="KW-1185">Reference proteome</keyword>
<keyword id="KW-0732">Signal</keyword>
<keyword id="KW-0832">Ubl conjugation</keyword>
<protein>
    <recommendedName>
        <fullName evidence="48">Endoplasmic reticulum chaperone BiP</fullName>
        <ecNumber evidence="31">3.6.4.10</ecNumber>
    </recommendedName>
    <alternativeName>
        <fullName evidence="46">78 kDa glucose-regulated protein</fullName>
        <shortName evidence="46">GRP-78</shortName>
    </alternativeName>
    <alternativeName>
        <fullName evidence="47">Binding-immunoglobulin protein</fullName>
        <shortName evidence="47">BiP</shortName>
    </alternativeName>
    <alternativeName>
        <fullName evidence="48">Heat shock protein 70 family protein 5</fullName>
        <shortName evidence="48">HSP70 family protein 5</shortName>
    </alternativeName>
    <alternativeName>
        <fullName evidence="50">Heat shock protein family A member 5</fullName>
    </alternativeName>
    <alternativeName>
        <fullName evidence="47">Immunoglobulin heavy chain-binding protein</fullName>
    </alternativeName>
</protein>
<gene>
    <name evidence="50" type="primary">HSPA5</name>
    <name evidence="46" type="synonym">GRP78</name>
</gene>
<sequence>MKLSLVAAMLLLLSAARAEEEDKKEDVGTVVGIDLGTTYSCVGVFKNGRVEIIANDQGNRITPSYVAFTPEGERLIGDAAKNQLTSNPENTVFDAKRLIGRTWNDPSVQQDIKFLPFKVVEKKTKPYIQVDIGGGQTKTFAPEEISAMVLTKMKETAEAYLGKKVTHAVVTVPAYFNDAQRQATKDAGTIAGLNVMRIINEPTAAAIAYGLDKREGEKNILVFDLGGGTFDVSLLTIDNGVFEVVATNGDTHLGGEDFDQRVMEHFIKLYKKKTGKDVRKDNRAVQKLRREVEKAKRALSSQHQARIEIESFYEGEDFSETLTRAKFEELNMDLFRSTMKPVQKVLEDSDLKKSDIDEIVLVGGSTRIPKIQQLVKEFFNGKEPSRGINPDEAVAYGAAVQAGVLSGDQDTGDLVLLDVCPLTLGIETVGGVMTKLIPRNTVVPTKKSQIFSTASDNQPTVTIKVYEGERPLTKDNHLLGTFDLTGIPPAPRGVPQIEVTFEIDVNGILRVTAEDKGTGNKNKITITNDQNRLTPEEIERMVNDAEKFAEEDKKLKERIDTRNELESYAYSLKNQIGDKEKLGGKLSSEDKETMEKAVEEKIEWLESHQDADIEDFKAKKKELEEIVQPIISKLYGSAGPPPTGEEDTAEKDEL</sequence>
<organism>
    <name type="scientific">Homo sapiens</name>
    <name type="common">Human</name>
    <dbReference type="NCBI Taxonomy" id="9606"/>
    <lineage>
        <taxon>Eukaryota</taxon>
        <taxon>Metazoa</taxon>
        <taxon>Chordata</taxon>
        <taxon>Craniata</taxon>
        <taxon>Vertebrata</taxon>
        <taxon>Euteleostomi</taxon>
        <taxon>Mammalia</taxon>
        <taxon>Eutheria</taxon>
        <taxon>Euarchontoglires</taxon>
        <taxon>Primates</taxon>
        <taxon>Haplorrhini</taxon>
        <taxon>Catarrhini</taxon>
        <taxon>Hominidae</taxon>
        <taxon>Homo</taxon>
    </lineage>
</organism>
<dbReference type="EC" id="3.6.4.10" evidence="31"/>
<dbReference type="EMBL" id="M19645">
    <property type="protein sequence ID" value="AAA52614.1"/>
    <property type="molecule type" value="Genomic_DNA"/>
</dbReference>
<dbReference type="EMBL" id="X87949">
    <property type="protein sequence ID" value="CAA61201.1"/>
    <property type="molecule type" value="mRNA"/>
</dbReference>
<dbReference type="EMBL" id="AJ271729">
    <property type="protein sequence ID" value="CAB71335.1"/>
    <property type="molecule type" value="mRNA"/>
</dbReference>
<dbReference type="EMBL" id="AF216292">
    <property type="protein sequence ID" value="AAF42836.1"/>
    <property type="molecule type" value="mRNA"/>
</dbReference>
<dbReference type="EMBL" id="DQ385847">
    <property type="protein sequence ID" value="ABD04090.1"/>
    <property type="molecule type" value="Genomic_DNA"/>
</dbReference>
<dbReference type="EMBL" id="AL354710">
    <property type="status" value="NOT_ANNOTATED_CDS"/>
    <property type="molecule type" value="Genomic_DNA"/>
</dbReference>
<dbReference type="EMBL" id="CH471090">
    <property type="protein sequence ID" value="EAW87620.1"/>
    <property type="molecule type" value="Genomic_DNA"/>
</dbReference>
<dbReference type="EMBL" id="BC020235">
    <property type="protein sequence ID" value="AAH20235.1"/>
    <property type="molecule type" value="mRNA"/>
</dbReference>
<dbReference type="EMBL" id="X59969">
    <property type="protein sequence ID" value="CAA42595.1"/>
    <property type="molecule type" value="Genomic_DNA"/>
</dbReference>
<dbReference type="EMBL" id="AF188611">
    <property type="protein sequence ID" value="AAF13605.1"/>
    <property type="status" value="ALT_SEQ"/>
    <property type="molecule type" value="mRNA"/>
</dbReference>
<dbReference type="CCDS" id="CCDS6863.1"/>
<dbReference type="PIR" id="A29821">
    <property type="entry name" value="A29821"/>
</dbReference>
<dbReference type="RefSeq" id="NP_005338.1">
    <property type="nucleotide sequence ID" value="NM_005347.5"/>
</dbReference>
<dbReference type="PDB" id="3IUC">
    <property type="method" value="X-ray"/>
    <property type="resolution" value="2.40 A"/>
    <property type="chains" value="A/C=26-410"/>
</dbReference>
<dbReference type="PDB" id="3LDL">
    <property type="method" value="X-ray"/>
    <property type="resolution" value="2.30 A"/>
    <property type="chains" value="A/B=26-407"/>
</dbReference>
<dbReference type="PDB" id="3LDN">
    <property type="method" value="X-ray"/>
    <property type="resolution" value="2.20 A"/>
    <property type="chains" value="A/B=26-407"/>
</dbReference>
<dbReference type="PDB" id="3LDO">
    <property type="method" value="X-ray"/>
    <property type="resolution" value="1.95 A"/>
    <property type="chains" value="A/B=26-407"/>
</dbReference>
<dbReference type="PDB" id="3LDP">
    <property type="method" value="X-ray"/>
    <property type="resolution" value="2.20 A"/>
    <property type="chains" value="A/B=26-407"/>
</dbReference>
<dbReference type="PDB" id="5E84">
    <property type="method" value="X-ray"/>
    <property type="resolution" value="2.99 A"/>
    <property type="chains" value="A/B/C/D/E/F=25-633"/>
</dbReference>
<dbReference type="PDB" id="5E85">
    <property type="method" value="X-ray"/>
    <property type="resolution" value="2.57 A"/>
    <property type="chains" value="A=418-637"/>
</dbReference>
<dbReference type="PDB" id="5E86">
    <property type="method" value="X-ray"/>
    <property type="resolution" value="2.68 A"/>
    <property type="chains" value="A=418-637"/>
</dbReference>
<dbReference type="PDB" id="5EVZ">
    <property type="method" value="X-ray"/>
    <property type="resolution" value="1.85 A"/>
    <property type="chains" value="A/B=26-407"/>
</dbReference>
<dbReference type="PDB" id="5EX5">
    <property type="method" value="X-ray"/>
    <property type="resolution" value="1.90 A"/>
    <property type="chains" value="A/B=26-407"/>
</dbReference>
<dbReference type="PDB" id="5EXW">
    <property type="method" value="X-ray"/>
    <property type="resolution" value="1.90 A"/>
    <property type="chains" value="A/B=26-407"/>
</dbReference>
<dbReference type="PDB" id="5EY4">
    <property type="method" value="X-ray"/>
    <property type="resolution" value="1.86 A"/>
    <property type="chains" value="A/B=26-407"/>
</dbReference>
<dbReference type="PDB" id="5F0X">
    <property type="method" value="X-ray"/>
    <property type="resolution" value="1.60 A"/>
    <property type="chains" value="A/B=26-407"/>
</dbReference>
<dbReference type="PDB" id="5F1X">
    <property type="method" value="X-ray"/>
    <property type="resolution" value="1.90 A"/>
    <property type="chains" value="A/B=26-407"/>
</dbReference>
<dbReference type="PDB" id="5F2R">
    <property type="method" value="X-ray"/>
    <property type="resolution" value="2.15 A"/>
    <property type="chains" value="A/B=26-407"/>
</dbReference>
<dbReference type="PDB" id="6ASY">
    <property type="method" value="X-ray"/>
    <property type="resolution" value="1.85 A"/>
    <property type="chains" value="A/B=25-633"/>
</dbReference>
<dbReference type="PDB" id="6CZ1">
    <property type="method" value="X-ray"/>
    <property type="resolution" value="1.68 A"/>
    <property type="chains" value="A/B=26-407"/>
</dbReference>
<dbReference type="PDB" id="6DFM">
    <property type="method" value="X-ray"/>
    <property type="resolution" value="2.14 A"/>
    <property type="chains" value="A/B=26-407"/>
</dbReference>
<dbReference type="PDB" id="6DFO">
    <property type="method" value="X-ray"/>
    <property type="resolution" value="2.54 A"/>
    <property type="chains" value="A/B=26-407"/>
</dbReference>
<dbReference type="PDB" id="6DO2">
    <property type="method" value="X-ray"/>
    <property type="resolution" value="1.70 A"/>
    <property type="chains" value="A/B=26-407"/>
</dbReference>
<dbReference type="PDB" id="6DWS">
    <property type="method" value="X-ray"/>
    <property type="resolution" value="1.90 A"/>
    <property type="chains" value="A/B=26-407"/>
</dbReference>
<dbReference type="PDB" id="6ZMD">
    <property type="method" value="X-ray"/>
    <property type="resolution" value="2.64 A"/>
    <property type="chains" value="A=28-549"/>
</dbReference>
<dbReference type="PDB" id="7N1R">
    <property type="method" value="X-ray"/>
    <property type="resolution" value="2.03 A"/>
    <property type="chains" value="A/B=25-633"/>
</dbReference>
<dbReference type="PDBsum" id="3IUC"/>
<dbReference type="PDBsum" id="3LDL"/>
<dbReference type="PDBsum" id="3LDN"/>
<dbReference type="PDBsum" id="3LDO"/>
<dbReference type="PDBsum" id="3LDP"/>
<dbReference type="PDBsum" id="5E84"/>
<dbReference type="PDBsum" id="5E85"/>
<dbReference type="PDBsum" id="5E86"/>
<dbReference type="PDBsum" id="5EVZ"/>
<dbReference type="PDBsum" id="5EX5"/>
<dbReference type="PDBsum" id="5EXW"/>
<dbReference type="PDBsum" id="5EY4"/>
<dbReference type="PDBsum" id="5F0X"/>
<dbReference type="PDBsum" id="5F1X"/>
<dbReference type="PDBsum" id="5F2R"/>
<dbReference type="PDBsum" id="6ASY"/>
<dbReference type="PDBsum" id="6CZ1"/>
<dbReference type="PDBsum" id="6DFM"/>
<dbReference type="PDBsum" id="6DFO"/>
<dbReference type="PDBsum" id="6DO2"/>
<dbReference type="PDBsum" id="6DWS"/>
<dbReference type="PDBsum" id="6ZMD"/>
<dbReference type="PDBsum" id="7N1R"/>
<dbReference type="SASBDB" id="P11021"/>
<dbReference type="SMR" id="P11021"/>
<dbReference type="BioGRID" id="109541">
    <property type="interactions" value="1729"/>
</dbReference>
<dbReference type="CORUM" id="P11021"/>
<dbReference type="DIP" id="DIP-33189N"/>
<dbReference type="ELM" id="P11021"/>
<dbReference type="FunCoup" id="P11021">
    <property type="interactions" value="3895"/>
</dbReference>
<dbReference type="IntAct" id="P11021">
    <property type="interactions" value="715"/>
</dbReference>
<dbReference type="MINT" id="P11021"/>
<dbReference type="STRING" id="9606.ENSP00000324173"/>
<dbReference type="BindingDB" id="P11021"/>
<dbReference type="ChEMBL" id="CHEMBL1781865"/>
<dbReference type="DrugBank" id="DB00945">
    <property type="generic name" value="Acetylsalicylic acid"/>
</dbReference>
<dbReference type="DrugBank" id="DB00025">
    <property type="generic name" value="Antihemophilic factor, human recombinant"/>
</dbReference>
<dbReference type="DrugBank" id="DB09130">
    <property type="generic name" value="Copper"/>
</dbReference>
<dbReference type="DrugBank" id="DB13998">
    <property type="generic name" value="Lonoctocog alfa"/>
</dbReference>
<dbReference type="DrugBank" id="DB13999">
    <property type="generic name" value="Moroctocog alfa"/>
</dbReference>
<dbReference type="DrugCentral" id="P11021"/>
<dbReference type="TCDB" id="1.A.33.1.5">
    <property type="family name" value="the cation channel-forming heat shock protein-70 (hsp70) family"/>
</dbReference>
<dbReference type="GlyCosmos" id="P11021">
    <property type="glycosylation" value="1 site, 1 glycan"/>
</dbReference>
<dbReference type="GlyGen" id="P11021">
    <property type="glycosylation" value="10 sites, 2 O-linked glycans (7 sites)"/>
</dbReference>
<dbReference type="iPTMnet" id="P11021"/>
<dbReference type="MetOSite" id="P11021"/>
<dbReference type="PhosphoSitePlus" id="P11021"/>
<dbReference type="SwissPalm" id="P11021"/>
<dbReference type="BioMuta" id="HSPA5"/>
<dbReference type="DMDM" id="14916999"/>
<dbReference type="OGP" id="P11021"/>
<dbReference type="REPRODUCTION-2DPAGE" id="P11021"/>
<dbReference type="CPTAC" id="CPTAC-524"/>
<dbReference type="CPTAC" id="CPTAC-525"/>
<dbReference type="CPTAC" id="non-CPTAC-2616"/>
<dbReference type="jPOST" id="P11021"/>
<dbReference type="MassIVE" id="P11021"/>
<dbReference type="PaxDb" id="9606-ENSP00000324173"/>
<dbReference type="PeptideAtlas" id="P11021"/>
<dbReference type="PRIDE" id="P11021"/>
<dbReference type="ProteomicsDB" id="52688"/>
<dbReference type="Pumba" id="P11021"/>
<dbReference type="TopDownProteomics" id="P11021"/>
<dbReference type="ABCD" id="P11021">
    <property type="antibodies" value="16 sequenced antibodies"/>
</dbReference>
<dbReference type="Antibodypedia" id="3926">
    <property type="antibodies" value="1737 antibodies from 49 providers"/>
</dbReference>
<dbReference type="DNASU" id="3309"/>
<dbReference type="Ensembl" id="ENST00000324460.7">
    <property type="protein sequence ID" value="ENSP00000324173.6"/>
    <property type="gene ID" value="ENSG00000044574.9"/>
</dbReference>
<dbReference type="GeneID" id="3309"/>
<dbReference type="KEGG" id="hsa:3309"/>
<dbReference type="MANE-Select" id="ENST00000324460.7">
    <property type="protein sequence ID" value="ENSP00000324173.6"/>
    <property type="RefSeq nucleotide sequence ID" value="NM_005347.5"/>
    <property type="RefSeq protein sequence ID" value="NP_005338.1"/>
</dbReference>
<dbReference type="AGR" id="HGNC:5238"/>
<dbReference type="CTD" id="3309"/>
<dbReference type="DisGeNET" id="3309"/>
<dbReference type="GeneCards" id="HSPA5"/>
<dbReference type="HGNC" id="HGNC:5238">
    <property type="gene designation" value="HSPA5"/>
</dbReference>
<dbReference type="HPA" id="ENSG00000044574">
    <property type="expression patterns" value="Low tissue specificity"/>
</dbReference>
<dbReference type="MIM" id="138120">
    <property type="type" value="gene"/>
</dbReference>
<dbReference type="neXtProt" id="NX_P11021"/>
<dbReference type="OpenTargets" id="ENSG00000044574"/>
<dbReference type="PharmGKB" id="PA29504"/>
<dbReference type="VEuPathDB" id="HostDB:ENSG00000044574"/>
<dbReference type="eggNOG" id="KOG0100">
    <property type="taxonomic scope" value="Eukaryota"/>
</dbReference>
<dbReference type="GeneTree" id="ENSGT00940000154787"/>
<dbReference type="HOGENOM" id="CLU_005965_3_0_1"/>
<dbReference type="InParanoid" id="P11021"/>
<dbReference type="OMA" id="VQRDIKH"/>
<dbReference type="OrthoDB" id="2401965at2759"/>
<dbReference type="PAN-GO" id="P11021">
    <property type="GO annotations" value="16 GO annotations based on evolutionary models"/>
</dbReference>
<dbReference type="PhylomeDB" id="P11021"/>
<dbReference type="TreeFam" id="TF105044"/>
<dbReference type="PathwayCommons" id="P11021"/>
<dbReference type="Reactome" id="R-HSA-114608">
    <property type="pathway name" value="Platelet degranulation"/>
</dbReference>
<dbReference type="Reactome" id="R-HSA-3371453">
    <property type="pathway name" value="Regulation of HSF1-mediated heat shock response"/>
</dbReference>
<dbReference type="Reactome" id="R-HSA-381033">
    <property type="pathway name" value="ATF6 (ATF6-alpha) activates chaperones"/>
</dbReference>
<dbReference type="Reactome" id="R-HSA-381042">
    <property type="pathway name" value="PERK regulates gene expression"/>
</dbReference>
<dbReference type="Reactome" id="R-HSA-381070">
    <property type="pathway name" value="IRE1alpha activates chaperones"/>
</dbReference>
<dbReference type="Reactome" id="R-HSA-381183">
    <property type="pathway name" value="ATF6 (ATF6-alpha) activates chaperone genes"/>
</dbReference>
<dbReference type="Reactome" id="R-HSA-8874177">
    <property type="pathway name" value="ATF6B (ATF6-beta) activates chaperones"/>
</dbReference>
<dbReference type="Reactome" id="R-HSA-983170">
    <property type="pathway name" value="Antigen Presentation: Folding, assembly and peptide loading of class I MHC"/>
</dbReference>
<dbReference type="Reactome" id="R-HSA-9909505">
    <property type="pathway name" value="Modulation of host responses by IFN-stimulated genes"/>
</dbReference>
<dbReference type="SignaLink" id="P11021"/>
<dbReference type="SIGNOR" id="P11021"/>
<dbReference type="BioGRID-ORCS" id="3309">
    <property type="hits" value="703 hits in 1167 CRISPR screens"/>
</dbReference>
<dbReference type="CD-CODE" id="232F8A39">
    <property type="entry name" value="P-body"/>
</dbReference>
<dbReference type="CD-CODE" id="91857CE7">
    <property type="entry name" value="Nucleolus"/>
</dbReference>
<dbReference type="CD-CODE" id="B5B9A610">
    <property type="entry name" value="PML body"/>
</dbReference>
<dbReference type="CD-CODE" id="BEB5E62D">
    <property type="entry name" value="Anisosome"/>
</dbReference>
<dbReference type="CD-CODE" id="DEE660B4">
    <property type="entry name" value="Stress granule"/>
</dbReference>
<dbReference type="CD-CODE" id="FB4E32DD">
    <property type="entry name" value="Presynaptic clusters and postsynaptic densities"/>
</dbReference>
<dbReference type="ChiTaRS" id="HSPA5">
    <property type="organism name" value="human"/>
</dbReference>
<dbReference type="EvolutionaryTrace" id="P11021"/>
<dbReference type="GeneWiki" id="Binding_immunoglobulin_protein"/>
<dbReference type="GenomeRNAi" id="3309"/>
<dbReference type="Pharos" id="P11021">
    <property type="development level" value="Tchem"/>
</dbReference>
<dbReference type="PRO" id="PR:P11021"/>
<dbReference type="Proteomes" id="UP000005640">
    <property type="component" value="Chromosome 9"/>
</dbReference>
<dbReference type="RNAct" id="P11021">
    <property type="molecule type" value="protein"/>
</dbReference>
<dbReference type="Bgee" id="ENSG00000044574">
    <property type="expression patterns" value="Expressed in vena cava and 214 other cell types or tissues"/>
</dbReference>
<dbReference type="ExpressionAtlas" id="P11021">
    <property type="expression patterns" value="baseline and differential"/>
</dbReference>
<dbReference type="GO" id="GO:0009986">
    <property type="term" value="C:cell surface"/>
    <property type="evidence" value="ECO:0007669"/>
    <property type="project" value="UniProtKB-SubCell"/>
</dbReference>
<dbReference type="GO" id="GO:0005737">
    <property type="term" value="C:cytoplasm"/>
    <property type="evidence" value="ECO:0000314"/>
    <property type="project" value="UniProtKB"/>
</dbReference>
<dbReference type="GO" id="GO:0005829">
    <property type="term" value="C:cytosol"/>
    <property type="evidence" value="ECO:0000314"/>
    <property type="project" value="UniProtKB"/>
</dbReference>
<dbReference type="GO" id="GO:0005783">
    <property type="term" value="C:endoplasmic reticulum"/>
    <property type="evidence" value="ECO:0000314"/>
    <property type="project" value="MGI"/>
</dbReference>
<dbReference type="GO" id="GO:0034663">
    <property type="term" value="C:endoplasmic reticulum chaperone complex"/>
    <property type="evidence" value="ECO:0000314"/>
    <property type="project" value="UniProtKB"/>
</dbReference>
<dbReference type="GO" id="GO:0005788">
    <property type="term" value="C:endoplasmic reticulum lumen"/>
    <property type="evidence" value="ECO:0000314"/>
    <property type="project" value="UniProtKB"/>
</dbReference>
<dbReference type="GO" id="GO:0005789">
    <property type="term" value="C:endoplasmic reticulum membrane"/>
    <property type="evidence" value="ECO:0000314"/>
    <property type="project" value="BHF-UCL"/>
</dbReference>
<dbReference type="GO" id="GO:0005793">
    <property type="term" value="C:endoplasmic reticulum-Golgi intermediate compartment"/>
    <property type="evidence" value="ECO:0000314"/>
    <property type="project" value="UniProtKB"/>
</dbReference>
<dbReference type="GO" id="GO:0070062">
    <property type="term" value="C:extracellular exosome"/>
    <property type="evidence" value="ECO:0007005"/>
    <property type="project" value="UniProtKB"/>
</dbReference>
<dbReference type="GO" id="GO:0005925">
    <property type="term" value="C:focal adhesion"/>
    <property type="evidence" value="ECO:0007005"/>
    <property type="project" value="UniProtKB"/>
</dbReference>
<dbReference type="GO" id="GO:0043231">
    <property type="term" value="C:intracellular membrane-bounded organelle"/>
    <property type="evidence" value="ECO:0000314"/>
    <property type="project" value="UniProtKB"/>
</dbReference>
<dbReference type="GO" id="GO:0042470">
    <property type="term" value="C:melanosome"/>
    <property type="evidence" value="ECO:0007669"/>
    <property type="project" value="UniProtKB-SubCell"/>
</dbReference>
<dbReference type="GO" id="GO:0016020">
    <property type="term" value="C:membrane"/>
    <property type="evidence" value="ECO:0007005"/>
    <property type="project" value="UniProtKB"/>
</dbReference>
<dbReference type="GO" id="GO:0030496">
    <property type="term" value="C:midbody"/>
    <property type="evidence" value="ECO:0000314"/>
    <property type="project" value="UniProtKB"/>
</dbReference>
<dbReference type="GO" id="GO:0005739">
    <property type="term" value="C:mitochondrion"/>
    <property type="evidence" value="ECO:0000314"/>
    <property type="project" value="UniProtKB"/>
</dbReference>
<dbReference type="GO" id="GO:0005634">
    <property type="term" value="C:nucleus"/>
    <property type="evidence" value="ECO:0000315"/>
    <property type="project" value="UniProtKB"/>
</dbReference>
<dbReference type="GO" id="GO:0005886">
    <property type="term" value="C:plasma membrane"/>
    <property type="evidence" value="ECO:0007669"/>
    <property type="project" value="Ensembl"/>
</dbReference>
<dbReference type="GO" id="GO:0032991">
    <property type="term" value="C:protein-containing complex"/>
    <property type="evidence" value="ECO:0000314"/>
    <property type="project" value="UniProtKB"/>
</dbReference>
<dbReference type="GO" id="GO:0005524">
    <property type="term" value="F:ATP binding"/>
    <property type="evidence" value="ECO:0000314"/>
    <property type="project" value="UniProtKB"/>
</dbReference>
<dbReference type="GO" id="GO:0016887">
    <property type="term" value="F:ATP hydrolysis activity"/>
    <property type="evidence" value="ECO:0000314"/>
    <property type="project" value="AgBase"/>
</dbReference>
<dbReference type="GO" id="GO:0140662">
    <property type="term" value="F:ATP-dependent protein folding chaperone"/>
    <property type="evidence" value="ECO:0007669"/>
    <property type="project" value="InterPro"/>
</dbReference>
<dbReference type="GO" id="GO:0045296">
    <property type="term" value="F:cadherin binding"/>
    <property type="evidence" value="ECO:0007005"/>
    <property type="project" value="BHF-UCL"/>
</dbReference>
<dbReference type="GO" id="GO:0005509">
    <property type="term" value="F:calcium ion binding"/>
    <property type="evidence" value="ECO:0000304"/>
    <property type="project" value="UniProtKB"/>
</dbReference>
<dbReference type="GO" id="GO:0019899">
    <property type="term" value="F:enzyme binding"/>
    <property type="evidence" value="ECO:0000353"/>
    <property type="project" value="BHF-UCL"/>
</dbReference>
<dbReference type="GO" id="GO:0031072">
    <property type="term" value="F:heat shock protein binding"/>
    <property type="evidence" value="ECO:0000318"/>
    <property type="project" value="GO_Central"/>
</dbReference>
<dbReference type="GO" id="GO:0051787">
    <property type="term" value="F:misfolded protein binding"/>
    <property type="evidence" value="ECO:0000314"/>
    <property type="project" value="UniProtKB"/>
</dbReference>
<dbReference type="GO" id="GO:0019904">
    <property type="term" value="F:protein domain specific binding"/>
    <property type="evidence" value="ECO:0000353"/>
    <property type="project" value="UniProtKB"/>
</dbReference>
<dbReference type="GO" id="GO:0044183">
    <property type="term" value="F:protein folding chaperone"/>
    <property type="evidence" value="ECO:0000318"/>
    <property type="project" value="GO_Central"/>
</dbReference>
<dbReference type="GO" id="GO:0030291">
    <property type="term" value="F:protein serine/threonine kinase inhibitor activity"/>
    <property type="evidence" value="ECO:0000314"/>
    <property type="project" value="UniProtKB"/>
</dbReference>
<dbReference type="GO" id="GO:0051087">
    <property type="term" value="F:protein-folding chaperone binding"/>
    <property type="evidence" value="ECO:0000304"/>
    <property type="project" value="BHF-UCL"/>
</dbReference>
<dbReference type="GO" id="GO:0043022">
    <property type="term" value="F:ribosome binding"/>
    <property type="evidence" value="ECO:0007669"/>
    <property type="project" value="Ensembl"/>
</dbReference>
<dbReference type="GO" id="GO:0031625">
    <property type="term" value="F:ubiquitin protein ligase binding"/>
    <property type="evidence" value="ECO:0000353"/>
    <property type="project" value="UniProtKB"/>
</dbReference>
<dbReference type="GO" id="GO:0051082">
    <property type="term" value="F:unfolded protein binding"/>
    <property type="evidence" value="ECO:0000304"/>
    <property type="project" value="UniProtKB"/>
</dbReference>
<dbReference type="GO" id="GO:0042149">
    <property type="term" value="P:cellular response to glucose starvation"/>
    <property type="evidence" value="ECO:0000314"/>
    <property type="project" value="UniProtKB"/>
</dbReference>
<dbReference type="GO" id="GO:0071353">
    <property type="term" value="P:cellular response to interleukin-4"/>
    <property type="evidence" value="ECO:0007669"/>
    <property type="project" value="Ensembl"/>
</dbReference>
<dbReference type="GO" id="GO:0021680">
    <property type="term" value="P:cerebellar Purkinje cell layer development"/>
    <property type="evidence" value="ECO:0007669"/>
    <property type="project" value="Ensembl"/>
</dbReference>
<dbReference type="GO" id="GO:0021589">
    <property type="term" value="P:cerebellum structural organization"/>
    <property type="evidence" value="ECO:0007669"/>
    <property type="project" value="Ensembl"/>
</dbReference>
<dbReference type="GO" id="GO:0051085">
    <property type="term" value="P:chaperone cofactor-dependent protein refolding"/>
    <property type="evidence" value="ECO:0000318"/>
    <property type="project" value="GO_Central"/>
</dbReference>
<dbReference type="GO" id="GO:0030968">
    <property type="term" value="P:endoplasmic reticulum unfolded protein response"/>
    <property type="evidence" value="ECO:0000318"/>
    <property type="project" value="GO_Central"/>
</dbReference>
<dbReference type="GO" id="GO:0006983">
    <property type="term" value="P:ER overload response"/>
    <property type="evidence" value="ECO:0007669"/>
    <property type="project" value="Ensembl"/>
</dbReference>
<dbReference type="GO" id="GO:0036503">
    <property type="term" value="P:ERAD pathway"/>
    <property type="evidence" value="ECO:0000318"/>
    <property type="project" value="GO_Central"/>
</dbReference>
<dbReference type="GO" id="GO:0035437">
    <property type="term" value="P:maintenance of protein localization in endoplasmic reticulum"/>
    <property type="evidence" value="ECO:0000315"/>
    <property type="project" value="UniProtKB"/>
</dbReference>
<dbReference type="GO" id="GO:0043066">
    <property type="term" value="P:negative regulation of apoptotic process"/>
    <property type="evidence" value="ECO:0000315"/>
    <property type="project" value="UniProtKB"/>
</dbReference>
<dbReference type="GO" id="GO:1903895">
    <property type="term" value="P:negative regulation of IRE1-mediated unfolded protein response"/>
    <property type="evidence" value="ECO:0000250"/>
    <property type="project" value="UniProtKB"/>
</dbReference>
<dbReference type="GO" id="GO:1903898">
    <property type="term" value="P:negative regulation of PERK-mediated unfolded protein response"/>
    <property type="evidence" value="ECO:0000314"/>
    <property type="project" value="UniProtKB"/>
</dbReference>
<dbReference type="GO" id="GO:0031333">
    <property type="term" value="P:negative regulation of protein-containing complex assembly"/>
    <property type="evidence" value="ECO:0000250"/>
    <property type="project" value="UniProtKB"/>
</dbReference>
<dbReference type="GO" id="GO:0030512">
    <property type="term" value="P:negative regulation of transforming growth factor beta receptor signaling pathway"/>
    <property type="evidence" value="ECO:0007669"/>
    <property type="project" value="Ensembl"/>
</dbReference>
<dbReference type="GO" id="GO:0030335">
    <property type="term" value="P:positive regulation of cell migration"/>
    <property type="evidence" value="ECO:0000315"/>
    <property type="project" value="UniProtKB"/>
</dbReference>
<dbReference type="GO" id="GO:0031398">
    <property type="term" value="P:positive regulation of protein ubiquitination"/>
    <property type="evidence" value="ECO:0007669"/>
    <property type="project" value="Ensembl"/>
</dbReference>
<dbReference type="GO" id="GO:0045944">
    <property type="term" value="P:positive regulation of transcription by RNA polymerase II"/>
    <property type="evidence" value="ECO:0000304"/>
    <property type="project" value="ParkinsonsUK-UCL"/>
</dbReference>
<dbReference type="GO" id="GO:0031204">
    <property type="term" value="P:post-translational protein targeting to membrane, translocation"/>
    <property type="evidence" value="ECO:0000315"/>
    <property type="project" value="UniProtKB"/>
</dbReference>
<dbReference type="GO" id="GO:0034975">
    <property type="term" value="P:protein folding in endoplasmic reticulum"/>
    <property type="evidence" value="ECO:0000304"/>
    <property type="project" value="ParkinsonsUK-UCL"/>
</dbReference>
<dbReference type="GO" id="GO:0042026">
    <property type="term" value="P:protein refolding"/>
    <property type="evidence" value="ECO:0000318"/>
    <property type="project" value="GO_Central"/>
</dbReference>
<dbReference type="GO" id="GO:1903891">
    <property type="term" value="P:regulation of ATF6-mediated unfolded protein response"/>
    <property type="evidence" value="ECO:0000304"/>
    <property type="project" value="ParkinsonsUK-UCL"/>
</dbReference>
<dbReference type="GO" id="GO:1903894">
    <property type="term" value="P:regulation of IRE1-mediated unfolded protein response"/>
    <property type="evidence" value="ECO:0000304"/>
    <property type="project" value="ParkinsonsUK-UCL"/>
</dbReference>
<dbReference type="GO" id="GO:1903897">
    <property type="term" value="P:regulation of PERK-mediated unfolded protein response"/>
    <property type="evidence" value="ECO:0000304"/>
    <property type="project" value="ParkinsonsUK-UCL"/>
</dbReference>
<dbReference type="GO" id="GO:0060904">
    <property type="term" value="P:regulation of protein folding in endoplasmic reticulum"/>
    <property type="evidence" value="ECO:0000304"/>
    <property type="project" value="BHF-UCL"/>
</dbReference>
<dbReference type="GO" id="GO:0034976">
    <property type="term" value="P:response to endoplasmic reticulum stress"/>
    <property type="evidence" value="ECO:0000304"/>
    <property type="project" value="ParkinsonsUK-UCL"/>
</dbReference>
<dbReference type="GO" id="GO:0021762">
    <property type="term" value="P:substantia nigra development"/>
    <property type="evidence" value="ECO:0007007"/>
    <property type="project" value="UniProtKB"/>
</dbReference>
<dbReference type="CDD" id="cd10241">
    <property type="entry name" value="ASKHA_NBD_HSP70_BiP"/>
    <property type="match status" value="1"/>
</dbReference>
<dbReference type="DisProt" id="DP01938"/>
<dbReference type="FunFam" id="3.30.420.40:FF:000720">
    <property type="entry name" value="Endoplasmic reticulum chaperone BiP"/>
    <property type="match status" value="1"/>
</dbReference>
<dbReference type="FunFam" id="3.90.640.10:FF:000153">
    <property type="entry name" value="Endoplasmic reticulum chaperone BiP"/>
    <property type="match status" value="1"/>
</dbReference>
<dbReference type="FunFam" id="2.60.34.10:FF:000002">
    <property type="entry name" value="Heat shock 70 kDa"/>
    <property type="match status" value="1"/>
</dbReference>
<dbReference type="FunFam" id="3.30.30.30:FF:000001">
    <property type="entry name" value="heat shock 70 kDa protein-like"/>
    <property type="match status" value="1"/>
</dbReference>
<dbReference type="FunFam" id="1.20.1270.10:FF:000061">
    <property type="entry name" value="Heat shock protein family A (Hsp70) member 5"/>
    <property type="match status" value="1"/>
</dbReference>
<dbReference type="Gene3D" id="1.20.1270.10">
    <property type="match status" value="1"/>
</dbReference>
<dbReference type="Gene3D" id="3.30.420.40">
    <property type="match status" value="2"/>
</dbReference>
<dbReference type="Gene3D" id="3.90.640.10">
    <property type="entry name" value="Actin, Chain A, domain 4"/>
    <property type="match status" value="1"/>
</dbReference>
<dbReference type="Gene3D" id="2.60.34.10">
    <property type="entry name" value="Substrate Binding Domain Of DNAk, Chain A, domain 1"/>
    <property type="match status" value="1"/>
</dbReference>
<dbReference type="InterPro" id="IPR043129">
    <property type="entry name" value="ATPase_NBD"/>
</dbReference>
<dbReference type="InterPro" id="IPR042050">
    <property type="entry name" value="BIP_NBD"/>
</dbReference>
<dbReference type="InterPro" id="IPR018181">
    <property type="entry name" value="Heat_shock_70_CS"/>
</dbReference>
<dbReference type="InterPro" id="IPR029048">
    <property type="entry name" value="HSP70_C_sf"/>
</dbReference>
<dbReference type="InterPro" id="IPR029047">
    <property type="entry name" value="HSP70_peptide-bd_sf"/>
</dbReference>
<dbReference type="InterPro" id="IPR013126">
    <property type="entry name" value="Hsp_70_fam"/>
</dbReference>
<dbReference type="NCBIfam" id="NF001413">
    <property type="entry name" value="PRK00290.1"/>
    <property type="match status" value="1"/>
</dbReference>
<dbReference type="PANTHER" id="PTHR19375">
    <property type="entry name" value="HEAT SHOCK PROTEIN 70KDA"/>
    <property type="match status" value="1"/>
</dbReference>
<dbReference type="Pfam" id="PF00012">
    <property type="entry name" value="HSP70"/>
    <property type="match status" value="1"/>
</dbReference>
<dbReference type="PRINTS" id="PR00301">
    <property type="entry name" value="HEATSHOCK70"/>
</dbReference>
<dbReference type="SUPFAM" id="SSF53067">
    <property type="entry name" value="Actin-like ATPase domain"/>
    <property type="match status" value="2"/>
</dbReference>
<dbReference type="SUPFAM" id="SSF100934">
    <property type="entry name" value="Heat shock protein 70kD (HSP70), C-terminal subdomain"/>
    <property type="match status" value="1"/>
</dbReference>
<dbReference type="SUPFAM" id="SSF100920">
    <property type="entry name" value="Heat shock protein 70kD (HSP70), peptide-binding domain"/>
    <property type="match status" value="1"/>
</dbReference>
<dbReference type="PROSITE" id="PS00014">
    <property type="entry name" value="ER_TARGET"/>
    <property type="match status" value="1"/>
</dbReference>
<dbReference type="PROSITE" id="PS00297">
    <property type="entry name" value="HSP70_1"/>
    <property type="match status" value="1"/>
</dbReference>
<dbReference type="PROSITE" id="PS00329">
    <property type="entry name" value="HSP70_2"/>
    <property type="match status" value="1"/>
</dbReference>
<dbReference type="PROSITE" id="PS01036">
    <property type="entry name" value="HSP70_3"/>
    <property type="match status" value="1"/>
</dbReference>
<evidence type="ECO:0000250" key="1">
    <source>
        <dbReference type="UniProtKB" id="G3I8R9"/>
    </source>
</evidence>
<evidence type="ECO:0000250" key="2">
    <source>
        <dbReference type="UniProtKB" id="P06761"/>
    </source>
</evidence>
<evidence type="ECO:0000250" key="3">
    <source>
        <dbReference type="UniProtKB" id="P0DMV8"/>
    </source>
</evidence>
<evidence type="ECO:0000250" key="4">
    <source>
        <dbReference type="UniProtKB" id="P20029"/>
    </source>
</evidence>
<evidence type="ECO:0000255" key="5"/>
<evidence type="ECO:0000256" key="6">
    <source>
        <dbReference type="SAM" id="MobiDB-lite"/>
    </source>
</evidence>
<evidence type="ECO:0000269" key="7">
    <source>
    </source>
</evidence>
<evidence type="ECO:0000269" key="8">
    <source>
    </source>
</evidence>
<evidence type="ECO:0000269" key="9">
    <source>
    </source>
</evidence>
<evidence type="ECO:0000269" key="10">
    <source>
    </source>
</evidence>
<evidence type="ECO:0000269" key="11">
    <source>
    </source>
</evidence>
<evidence type="ECO:0000269" key="12">
    <source>
    </source>
</evidence>
<evidence type="ECO:0000269" key="13">
    <source>
    </source>
</evidence>
<evidence type="ECO:0000269" key="14">
    <source>
    </source>
</evidence>
<evidence type="ECO:0000269" key="15">
    <source>
    </source>
</evidence>
<evidence type="ECO:0000269" key="16">
    <source>
    </source>
</evidence>
<evidence type="ECO:0000269" key="17">
    <source>
    </source>
</evidence>
<evidence type="ECO:0000269" key="18">
    <source>
    </source>
</evidence>
<evidence type="ECO:0000269" key="19">
    <source>
    </source>
</evidence>
<evidence type="ECO:0000269" key="20">
    <source>
    </source>
</evidence>
<evidence type="ECO:0000269" key="21">
    <source>
    </source>
</evidence>
<evidence type="ECO:0000269" key="22">
    <source>
    </source>
</evidence>
<evidence type="ECO:0000269" key="23">
    <source>
    </source>
</evidence>
<evidence type="ECO:0000269" key="24">
    <source>
    </source>
</evidence>
<evidence type="ECO:0000269" key="25">
    <source>
    </source>
</evidence>
<evidence type="ECO:0000269" key="26">
    <source>
    </source>
</evidence>
<evidence type="ECO:0000269" key="27">
    <source>
    </source>
</evidence>
<evidence type="ECO:0000269" key="28">
    <source>
    </source>
</evidence>
<evidence type="ECO:0000269" key="29">
    <source>
    </source>
</evidence>
<evidence type="ECO:0000269" key="30">
    <source>
    </source>
</evidence>
<evidence type="ECO:0000269" key="31">
    <source>
    </source>
</evidence>
<evidence type="ECO:0000269" key="32">
    <source>
    </source>
</evidence>
<evidence type="ECO:0000269" key="33">
    <source>
    </source>
</evidence>
<evidence type="ECO:0000269" key="34">
    <source>
    </source>
</evidence>
<evidence type="ECO:0000269" key="35">
    <source>
    </source>
</evidence>
<evidence type="ECO:0000269" key="36">
    <source>
    </source>
</evidence>
<evidence type="ECO:0000269" key="37">
    <source>
    </source>
</evidence>
<evidence type="ECO:0000269" key="38">
    <source>
    </source>
</evidence>
<evidence type="ECO:0000269" key="39">
    <source>
    </source>
</evidence>
<evidence type="ECO:0000269" key="40">
    <source>
    </source>
</evidence>
<evidence type="ECO:0000269" key="41">
    <source>
    </source>
</evidence>
<evidence type="ECO:0000269" key="42">
    <source>
    </source>
</evidence>
<evidence type="ECO:0000269" key="43">
    <source>
    </source>
</evidence>
<evidence type="ECO:0000269" key="44">
    <source ref="5"/>
</evidence>
<evidence type="ECO:0000303" key="45">
    <source>
    </source>
</evidence>
<evidence type="ECO:0000303" key="46">
    <source>
    </source>
</evidence>
<evidence type="ECO:0000303" key="47">
    <source ref="4"/>
</evidence>
<evidence type="ECO:0000305" key="48"/>
<evidence type="ECO:0000305" key="49">
    <source>
    </source>
</evidence>
<evidence type="ECO:0000312" key="50">
    <source>
        <dbReference type="HGNC" id="HGNC:5238"/>
    </source>
</evidence>
<evidence type="ECO:0007744" key="51">
    <source>
        <dbReference type="PDB" id="5E84"/>
    </source>
</evidence>
<evidence type="ECO:0007744" key="52">
    <source>
        <dbReference type="PDB" id="5E85"/>
    </source>
</evidence>
<evidence type="ECO:0007744" key="53">
    <source>
        <dbReference type="PDB" id="5E86"/>
    </source>
</evidence>
<evidence type="ECO:0007744" key="54">
    <source>
    </source>
</evidence>
<evidence type="ECO:0007744" key="55">
    <source>
    </source>
</evidence>
<evidence type="ECO:0007744" key="56">
    <source>
    </source>
</evidence>
<evidence type="ECO:0007744" key="57">
    <source>
    </source>
</evidence>
<evidence type="ECO:0007744" key="58">
    <source>
    </source>
</evidence>
<evidence type="ECO:0007744" key="59">
    <source>
    </source>
</evidence>
<evidence type="ECO:0007744" key="60">
    <source>
    </source>
</evidence>
<evidence type="ECO:0007829" key="61">
    <source>
        <dbReference type="PDB" id="5E85"/>
    </source>
</evidence>
<evidence type="ECO:0007829" key="62">
    <source>
        <dbReference type="PDB" id="5F0X"/>
    </source>
</evidence>
<evidence type="ECO:0007829" key="63">
    <source>
        <dbReference type="PDB" id="6ASY"/>
    </source>
</evidence>
<evidence type="ECO:0007829" key="64">
    <source>
        <dbReference type="PDB" id="7N1R"/>
    </source>
</evidence>
<feature type="signal peptide" evidence="23 43">
    <location>
        <begin position="1"/>
        <end position="18"/>
    </location>
</feature>
<feature type="chain" id="PRO_0000013566" description="Endoplasmic reticulum chaperone BiP">
    <location>
        <begin position="19"/>
        <end position="654"/>
    </location>
</feature>
<feature type="region of interest" description="Required for interaction with ELAPOR1" evidence="30">
    <location>
        <begin position="1"/>
        <end position="80"/>
    </location>
</feature>
<feature type="region of interest" description="Nucleotide-binding (NBD)" evidence="45">
    <location>
        <begin position="125"/>
        <end position="280"/>
    </location>
</feature>
<feature type="region of interest" description="Interdomain linker" evidence="1">
    <location>
        <begin position="409"/>
        <end position="419"/>
    </location>
</feature>
<feature type="region of interest" description="Substrate-binding (SBD)" evidence="45">
    <location>
        <begin position="420"/>
        <end position="500"/>
    </location>
</feature>
<feature type="region of interest" description="Disordered" evidence="6">
    <location>
        <begin position="633"/>
        <end position="654"/>
    </location>
</feature>
<feature type="short sequence motif" description="Prevents secretion from ER" evidence="5">
    <location>
        <begin position="651"/>
        <end position="654"/>
    </location>
</feature>
<feature type="compositionally biased region" description="Acidic residues" evidence="6">
    <location>
        <begin position="644"/>
        <end position="654"/>
    </location>
</feature>
<feature type="binding site" evidence="20">
    <location>
        <begin position="36"/>
        <end position="39"/>
    </location>
    <ligand>
        <name>ATP</name>
        <dbReference type="ChEBI" id="CHEBI:30616"/>
    </ligand>
</feature>
<feature type="binding site" evidence="20">
    <location>
        <position position="96"/>
    </location>
    <ligand>
        <name>ATP</name>
        <dbReference type="ChEBI" id="CHEBI:30616"/>
    </ligand>
</feature>
<feature type="binding site" evidence="20">
    <location>
        <begin position="227"/>
        <end position="229"/>
    </location>
    <ligand>
        <name>ATP</name>
        <dbReference type="ChEBI" id="CHEBI:30616"/>
    </ligand>
</feature>
<feature type="binding site" evidence="20">
    <location>
        <begin position="293"/>
        <end position="300"/>
    </location>
    <ligand>
        <name>ATP</name>
        <dbReference type="ChEBI" id="CHEBI:30616"/>
    </ligand>
</feature>
<feature type="binding site" evidence="20">
    <location>
        <begin position="364"/>
        <end position="367"/>
    </location>
    <ligand>
        <name>ATP</name>
        <dbReference type="ChEBI" id="CHEBI:30616"/>
    </ligand>
</feature>
<feature type="modified residue" description="Phosphoserine" evidence="2">
    <location>
        <position position="86"/>
    </location>
</feature>
<feature type="modified residue" description="N6-acetyllysine" evidence="4">
    <location>
        <position position="125"/>
    </location>
</feature>
<feature type="modified residue" description="3'-nitrotyrosine" evidence="4">
    <location>
        <position position="160"/>
    </location>
</feature>
<feature type="modified residue" description="N6-acetyllysine" evidence="4">
    <location>
        <position position="213"/>
    </location>
</feature>
<feature type="modified residue" description="N6-acetyllysine" evidence="3">
    <location>
        <position position="271"/>
    </location>
</feature>
<feature type="modified residue" description="N6-acetyllysine" evidence="4">
    <location>
        <position position="326"/>
    </location>
</feature>
<feature type="modified residue" description="N6-acetyllysine; alternate" evidence="4">
    <location>
        <position position="353"/>
    </location>
</feature>
<feature type="modified residue" description="N6-succinyllysine" evidence="4">
    <location>
        <position position="447"/>
    </location>
</feature>
<feature type="modified residue" description="Omega-N-methylarginine" evidence="3">
    <location>
        <position position="492"/>
    </location>
</feature>
<feature type="modified residue" description="O-AMP-threonine; alternate" evidence="1">
    <location>
        <position position="518"/>
    </location>
</feature>
<feature type="modified residue" description="Phosphothreonine; alternate" evidence="54 56">
    <location>
        <position position="518"/>
    </location>
</feature>
<feature type="modified residue" description="N6,N6,N6-trimethyllysine; by METTL21A; in vitro" evidence="24 26 55">
    <location>
        <position position="585"/>
    </location>
</feature>
<feature type="modified residue" description="N6,N6-dimethyllysine; alternate" evidence="55">
    <location>
        <position position="585"/>
    </location>
</feature>
<feature type="modified residue" description="N6-methyllysine; alternate" evidence="55">
    <location>
        <position position="585"/>
    </location>
</feature>
<feature type="modified residue" description="N6-methyllysine" evidence="55">
    <location>
        <position position="591"/>
    </location>
</feature>
<feature type="modified residue" description="Phosphothreonine" evidence="4">
    <location>
        <position position="643"/>
    </location>
</feature>
<feature type="modified residue" description="Phosphothreonine" evidence="4">
    <location>
        <position position="648"/>
    </location>
</feature>
<feature type="cross-link" description="Glycyl lysine isopeptide (Lys-Gly) (interchain with G-Cter in SUMO2)" evidence="57 58 59 60">
    <location>
        <position position="352"/>
    </location>
</feature>
<feature type="cross-link" description="Glycyl lysine isopeptide (Lys-Gly) (interchain with G-Cter in SUMO1); alternate" evidence="57">
    <location>
        <position position="353"/>
    </location>
</feature>
<feature type="sequence variant" id="VAR_025815" description="In dbSNP:rs35356639." evidence="44">
    <original>N</original>
    <variation>H</variation>
    <location>
        <position position="543"/>
    </location>
</feature>
<feature type="mutagenesis site" description="Impaired ATPase activity." evidence="31">
    <original>T</original>
    <variation>A</variation>
    <location>
        <position position="229"/>
    </location>
</feature>
<feature type="mutagenesis site" description="Significantly reduced binding to ZIKV E and NS1 proteins." evidence="42">
    <original>R</original>
    <variation>E</variation>
    <location>
        <position position="492"/>
    </location>
</feature>
<feature type="mutagenesis site" description="Significantly reduced binding to ZIKV E and NS1 proteins." evidence="42">
    <original>T</original>
    <variation>A</variation>
    <location>
        <position position="518"/>
    </location>
</feature>
<feature type="mutagenesis site" description="Complete loss of in vitro methylation by METTL21A." evidence="24 26">
    <original>K</original>
    <variation>R</variation>
    <location>
        <position position="585"/>
    </location>
</feature>
<feature type="sequence conflict" description="In Ref. 1; AAA52614 and 2; CAA61201." evidence="48" ref="1 2">
    <location>
        <position position="297"/>
    </location>
</feature>
<feature type="sequence conflict" description="In Ref. 1; AAA52614 and 2; CAA61201." evidence="48" ref="1 2">
    <original>D</original>
    <variation>H</variation>
    <location>
        <position position="418"/>
    </location>
</feature>
<feature type="sequence conflict" description="In Ref. 1; AAA52614 and 2; CAA61201." evidence="48" ref="1 2">
    <original>R</original>
    <variation>S</variation>
    <location>
        <position position="439"/>
    </location>
</feature>
<feature type="sequence conflict" description="In Ref. 1; AAA52614 and 2; CAA61201." evidence="48" ref="1 2">
    <original>K</original>
    <variation>N</variation>
    <location>
        <position position="447"/>
    </location>
</feature>
<feature type="strand" evidence="62">
    <location>
        <begin position="31"/>
        <end position="34"/>
    </location>
</feature>
<feature type="strand" evidence="62">
    <location>
        <begin position="37"/>
        <end position="45"/>
    </location>
</feature>
<feature type="strand" evidence="62">
    <location>
        <begin position="47"/>
        <end position="52"/>
    </location>
</feature>
<feature type="strand" evidence="62">
    <location>
        <begin position="60"/>
        <end position="63"/>
    </location>
</feature>
<feature type="strand" evidence="62">
    <location>
        <begin position="66"/>
        <end position="68"/>
    </location>
</feature>
<feature type="strand" evidence="62">
    <location>
        <begin position="74"/>
        <end position="76"/>
    </location>
</feature>
<feature type="helix" evidence="62">
    <location>
        <begin position="78"/>
        <end position="82"/>
    </location>
</feature>
<feature type="helix" evidence="63">
    <location>
        <begin position="84"/>
        <end position="86"/>
    </location>
</feature>
<feature type="helix" evidence="62">
    <location>
        <begin position="88"/>
        <end position="90"/>
    </location>
</feature>
<feature type="strand" evidence="63">
    <location>
        <begin position="91"/>
        <end position="93"/>
    </location>
</feature>
<feature type="helix" evidence="62">
    <location>
        <begin position="95"/>
        <end position="97"/>
    </location>
</feature>
<feature type="turn" evidence="62">
    <location>
        <begin position="98"/>
        <end position="100"/>
    </location>
</feature>
<feature type="helix" evidence="62">
    <location>
        <begin position="106"/>
        <end position="114"/>
    </location>
</feature>
<feature type="strand" evidence="62">
    <location>
        <begin position="116"/>
        <end position="122"/>
    </location>
</feature>
<feature type="strand" evidence="62">
    <location>
        <begin position="125"/>
        <end position="131"/>
    </location>
</feature>
<feature type="strand" evidence="62">
    <location>
        <begin position="137"/>
        <end position="140"/>
    </location>
</feature>
<feature type="helix" evidence="62">
    <location>
        <begin position="142"/>
        <end position="161"/>
    </location>
</feature>
<feature type="strand" evidence="62">
    <location>
        <begin position="167"/>
        <end position="172"/>
    </location>
</feature>
<feature type="helix" evidence="62">
    <location>
        <begin position="178"/>
        <end position="190"/>
    </location>
</feature>
<feature type="strand" evidence="62">
    <location>
        <begin position="194"/>
        <end position="200"/>
    </location>
</feature>
<feature type="helix" evidence="62">
    <location>
        <begin position="201"/>
        <end position="208"/>
    </location>
</feature>
<feature type="turn" evidence="62">
    <location>
        <begin position="209"/>
        <end position="212"/>
    </location>
</feature>
<feature type="strand" evidence="62">
    <location>
        <begin position="215"/>
        <end position="225"/>
    </location>
</feature>
<feature type="strand" evidence="62">
    <location>
        <begin position="230"/>
        <end position="238"/>
    </location>
</feature>
<feature type="strand" evidence="62">
    <location>
        <begin position="241"/>
        <end position="250"/>
    </location>
</feature>
<feature type="helix" evidence="62">
    <location>
        <begin position="255"/>
        <end position="274"/>
    </location>
</feature>
<feature type="helix" evidence="62">
    <location>
        <begin position="278"/>
        <end position="280"/>
    </location>
</feature>
<feature type="helix" evidence="62">
    <location>
        <begin position="282"/>
        <end position="298"/>
    </location>
</feature>
<feature type="turn" evidence="62">
    <location>
        <begin position="299"/>
        <end position="301"/>
    </location>
</feature>
<feature type="strand" evidence="62">
    <location>
        <begin position="302"/>
        <end position="313"/>
    </location>
</feature>
<feature type="strand" evidence="62">
    <location>
        <begin position="316"/>
        <end position="323"/>
    </location>
</feature>
<feature type="helix" evidence="62">
    <location>
        <begin position="324"/>
        <end position="337"/>
    </location>
</feature>
<feature type="helix" evidence="62">
    <location>
        <begin position="339"/>
        <end position="348"/>
    </location>
</feature>
<feature type="helix" evidence="62">
    <location>
        <begin position="353"/>
        <end position="355"/>
    </location>
</feature>
<feature type="strand" evidence="62">
    <location>
        <begin position="358"/>
        <end position="363"/>
    </location>
</feature>
<feature type="helix" evidence="62">
    <location>
        <begin position="364"/>
        <end position="367"/>
    </location>
</feature>
<feature type="helix" evidence="62">
    <location>
        <begin position="369"/>
        <end position="378"/>
    </location>
</feature>
<feature type="turn" evidence="62">
    <location>
        <begin position="379"/>
        <end position="381"/>
    </location>
</feature>
<feature type="turn" evidence="62">
    <location>
        <begin position="390"/>
        <end position="392"/>
    </location>
</feature>
<feature type="helix" evidence="62">
    <location>
        <begin position="393"/>
        <end position="405"/>
    </location>
</feature>
<feature type="strand" evidence="63">
    <location>
        <begin position="415"/>
        <end position="419"/>
    </location>
</feature>
<feature type="strand" evidence="63">
    <location>
        <begin position="424"/>
        <end position="428"/>
    </location>
</feature>
<feature type="turn" evidence="61">
    <location>
        <begin position="429"/>
        <end position="431"/>
    </location>
</feature>
<feature type="strand" evidence="63">
    <location>
        <begin position="433"/>
        <end position="437"/>
    </location>
</feature>
<feature type="strand" evidence="63">
    <location>
        <begin position="442"/>
        <end position="451"/>
    </location>
</feature>
<feature type="strand" evidence="63">
    <location>
        <begin position="461"/>
        <end position="468"/>
    </location>
</feature>
<feature type="helix" evidence="63">
    <location>
        <begin position="473"/>
        <end position="475"/>
    </location>
</feature>
<feature type="strand" evidence="63">
    <location>
        <begin position="476"/>
        <end position="484"/>
    </location>
</feature>
<feature type="strand" evidence="63">
    <location>
        <begin position="491"/>
        <end position="493"/>
    </location>
</feature>
<feature type="strand" evidence="63">
    <location>
        <begin position="497"/>
        <end position="503"/>
    </location>
</feature>
<feature type="strand" evidence="63">
    <location>
        <begin position="509"/>
        <end position="515"/>
    </location>
</feature>
<feature type="turn" evidence="63">
    <location>
        <begin position="516"/>
        <end position="518"/>
    </location>
</feature>
<feature type="strand" evidence="64">
    <location>
        <begin position="524"/>
        <end position="526"/>
    </location>
</feature>
<feature type="turn" evidence="64">
    <location>
        <begin position="529"/>
        <end position="531"/>
    </location>
</feature>
<feature type="helix" evidence="63">
    <location>
        <begin position="535"/>
        <end position="576"/>
    </location>
</feature>
<feature type="turn" evidence="63">
    <location>
        <begin position="579"/>
        <end position="581"/>
    </location>
</feature>
<feature type="helix" evidence="63">
    <location>
        <begin position="582"/>
        <end position="585"/>
    </location>
</feature>
<feature type="helix" evidence="63">
    <location>
        <begin position="588"/>
        <end position="607"/>
    </location>
</feature>
<feature type="helix" evidence="63">
    <location>
        <begin position="613"/>
        <end position="631"/>
    </location>
</feature>
<comment type="function">
    <text evidence="1 4 8 13 16 23 25 27 30 36 38 41">Endoplasmic reticulum chaperone that plays a key role in protein folding and quality control in the endoplasmic reticulum lumen (PubMed:2294010, PubMed:23769672, PubMed:23990668, PubMed:28332555). Involved in the correct folding of proteins and degradation of misfolded proteins via its interaction with DNAJC10/ERdj5, probably to facilitate the release of DNAJC10/ERdj5 from its substrate (By similarity). Acts as a key repressor of the EIF2AK3/PERK and ERN1/IRE1-mediated unfolded protein response (UPR) (PubMed:11907036, PubMed:1550958, PubMed:19538957, PubMed:36739529). In the unstressed endoplasmic reticulum, recruited by DNAJB9/ERdj4 to the luminal region of ERN1/IRE1, leading to disrupt the dimerization of ERN1/IRE1, thereby inactivating ERN1/IRE1 (By similarity). Also binds and inactivates EIF2AK3/PERK in unstressed cells (PubMed:11907036). Accumulation of misfolded protein in the endoplasmic reticulum causes release of HSPA5/BiP from ERN1/IRE1 and EIF2AK3/PERK, allowing their homodimerization and subsequent activation (PubMed:11907036). Plays an auxiliary role in post-translational transport of small presecretory proteins across endoplasmic reticulum (ER). May function as an allosteric modulator for SEC61 channel-forming translocon complex, likely cooperating with SEC62 to enable the productive insertion of these precursors into SEC61 channel. Appears to specifically regulate translocation of precursors having inhibitory residues in their mature region that weaken channel gating. May also play a role in apoptosis and cell proliferation (PubMed:26045166).</text>
</comment>
<comment type="function">
    <text evidence="12 35 40">(Microbial infection) Plays an important role in viral binding to the host cell membrane and entry for several flaviruses such as Dengue virus, Zika virus and Japanese encephalitis virus (PubMed:15098107, PubMed:28053106, PubMed:33432092). Acts as a component of the cellular receptor for Dengue virus serotype 2/DENV-2 on human liver cells (PubMed:15098107).</text>
</comment>
<comment type="function">
    <text evidence="17 28 39">(Microbial infection) Acts as a receptor for CotH proteins expressed by fungi of the order mucorales, the causative agent of mucormycosis, which plays an important role in epithelial cell invasion by the fungi (PubMed:20484814, PubMed:24355926, PubMed:32487760). Acts as a receptor for R.delemar CotH3 in nasal epithelial cells, which may be an early step in rhinoorbital/cerebral mucormycosis (RCM) disease progression (PubMed:32487760).</text>
</comment>
<comment type="catalytic activity">
    <reaction evidence="31">
        <text>ATP + H2O = ADP + phosphate + H(+)</text>
        <dbReference type="Rhea" id="RHEA:13065"/>
        <dbReference type="ChEBI" id="CHEBI:15377"/>
        <dbReference type="ChEBI" id="CHEBI:15378"/>
        <dbReference type="ChEBI" id="CHEBI:30616"/>
        <dbReference type="ChEBI" id="CHEBI:43474"/>
        <dbReference type="ChEBI" id="CHEBI:456216"/>
        <dbReference type="EC" id="3.6.4.10"/>
    </reaction>
</comment>
<comment type="activity regulation">
    <text evidence="1 31 45">The chaperone activity is regulated by ATP-induced allosteric coupling of the nucleotide-binding (NBD) and substrate-binding (SBD) domains. In the ADP-bound and nucleotide-free (apo) states, the two domains have little interaction (PubMed:26655470). In contrast, in the ATP-bound state the two domains are tightly coupled, which results in drastically accelerated kinetics in both binding and release of polypeptide substrates (PubMed:26655470). J domain-containing co-chaperones (DNAJB9/ERdj4 or DNAJC10/ERdj5) stimulate the ATPase activity and are required for efficient substrate recognition by HSPA5/BiP (By similarity). Homooligomerization inactivates participating HSPA5/BiP protomers and probably act as reservoirs to store HSPA5/BiP molecules when they are not needed by the cell (By similarity).</text>
</comment>
<comment type="subunit">
    <text evidence="1 4 8 9 11 14 15 18 19 21 22 24 25 27 30 32 33 36 41 49">Monomer and homooligomer; homooligomerization via the interdomain linker inactivates the chaperone activity and acts as a storage of HSPA5/BiP molecules (By similarity). Interacts with DNAJC1 (via J domain) (By similarity). Component of an EIF2 complex at least composed of CELF1/CUGBP1, CALR, CALR3, EIF2S1, EIF2S2, HSP90B1 and HSPA5 (By similarity). Part of a large chaperone multiprotein complex comprising DNAJB11, HSP90B1, HSPA5, HYOU, PDIA2, PDIA4, PDIA6, PPIB, SDF2L1, UGGT1 and very small amounts of ERP29, but not, or at very low levels, CALR nor CANX (By similarity). Interacts with TMEM132A and TRIM21 (PubMed:12699405). May form a complex with ERLEC1, OS9, SEL1L and SYVN1 (PubMed:18264092, PubMed:18502753). Interacts with DNAJC10 (PubMed:12411443, PubMed:23769672). Interacts with DNAJB9/ERdj4; leading to recruit HSPA5/BiP to ERN1/IRE1 (By similarity). Interacts with ERN1/IRE1 (via luminal domain); the interaction takes place following interaction with DNAJB9/ERdj4 and leads to inactivate ERN1/IRE1, the interaction also competitively inhibits ERN1 interaction with MANF (PubMed:36739529). Interacts directly with MANF (via SAP domain); the interaction inhibits ATP binding to HSPA5/BiP and subsequent nucleotide exchange (By similarity). Interacts with EIF2AK3/PERK (via luminal domain); interaction leads to inactivate EIF2AK3/PERK (PubMed:11907036, PubMed:36739529). Interacts with MX1 (By similarity). Interacts with METTL23 (PubMed:23349634). Interacts with CEMIP; the interaction induces calcium leakage from the endoplasmic reticulum and cell migration (PubMed:23990668). Interacts with PCSK4 form; the interaction takes place in the endoplasmic reticulum (PubMed:21080038). Interacts with CIPC (PubMed:26657846). Interacts with CCDC88B (via C-terminus); the interaction opposes ERN1-mediated JNK activation, protecting against apoptosis (PubMed:21289099). Interacts with INPP5K; necessary for INPP5K localization at the endoplasmic reticulum (PubMed:26940976). Interacts with MANF; the interaction is direct (PubMed:22637475). Interacts with LOXL2; leading to activate the ERN1/IRE1-XBP1 pathway of the unfolded protein response (PubMed:28332555). Interacts with CLU under stressed condition; interaction increases CLU protein stability; facilitates its retrotranslocation and redistribution to the mitochondria; cooperatively suppress stress-induced apoptosis by stabilizing mitochondrial membrane integrity (PubMed:22689054). Interacts with CCDC47 (By similarity). Interacts with CLN3 (Probable). Interacts with ELAPOR1; may regulate the function of HSPA5 in apoptosis and cell proliferation (PubMed:26045166). Interacts with CASP7 (PubMed:26045166). Interacts with ILDR2; the interaction stabilizes ILDR2 expression (By similarity). Interacts with ADAM7 (By similarity).</text>
</comment>
<comment type="subunit">
    <text evidence="35">(Microbial infection) Interacts with Japanese encephalitis virus envelope protein E.</text>
</comment>
<comment type="subunit">
    <text evidence="28 39">(Microbial infection) Interacts with R.delemar invasin CotH3 on the surface of nasal epithelial cells (PubMed:24355926, PubMed:32487760). Interacts with R.delemar invasin CotH2 (PubMed:24355926).</text>
</comment>
<comment type="subunit">
    <text evidence="40 42">(Microbial infection) Interacts with Zika virus envelope protein E and non-structural protein 1 in a chaperone-client manner.</text>
</comment>
<comment type="interaction">
    <interactant intactId="EBI-354921">
        <id>P11021</id>
    </interactant>
    <interactant intactId="EBI-7730807">
        <id>Q9BYF1</id>
        <label>ACE2</label>
    </interactant>
    <organismsDiffer>false</organismsDiffer>
    <experiments>6</experiments>
</comment>
<comment type="interaction">
    <interactant intactId="EBI-354921">
        <id>P11021</id>
    </interactant>
    <interactant intactId="EBI-77613">
        <id>P05067</id>
        <label>APP</label>
    </interactant>
    <organismsDiffer>false</organismsDiffer>
    <experiments>6</experiments>
</comment>
<comment type="interaction">
    <interactant intactId="EBI-354921">
        <id>P11021</id>
    </interactant>
    <interactant intactId="EBI-852157">
        <id>P18850</id>
        <label>ATF6</label>
    </interactant>
    <organismsDiffer>false</organismsDiffer>
    <experiments>2</experiments>
</comment>
<comment type="interaction">
    <interactant intactId="EBI-354921">
        <id>P11021</id>
    </interactant>
    <interactant intactId="EBI-23662416">
        <id>Q9ULD4-2</id>
        <label>BRPF3</label>
    </interactant>
    <organismsDiffer>false</organismsDiffer>
    <experiments>3</experiments>
</comment>
<comment type="interaction">
    <interactant intactId="EBI-354921">
        <id>P11021</id>
    </interactant>
    <interactant intactId="EBI-7943171">
        <id>Q6E0U4</id>
        <label>DMKN</label>
    </interactant>
    <organismsDiffer>false</organismsDiffer>
    <experiments>3</experiments>
</comment>
<comment type="interaction">
    <interactant intactId="EBI-354921">
        <id>P11021</id>
    </interactant>
    <interactant intactId="EBI-713113">
        <id>Q9UBS4</id>
        <label>DNAJB11</label>
    </interactant>
    <organismsDiffer>false</organismsDiffer>
    <experiments>5</experiments>
</comment>
<comment type="interaction">
    <interactant intactId="EBI-354921">
        <id>P11021</id>
    </interactant>
    <interactant intactId="EBI-713124">
        <id>Q9UBS3</id>
        <label>DNAJB9</label>
    </interactant>
    <organismsDiffer>false</organismsDiffer>
    <experiments>2</experiments>
</comment>
<comment type="interaction">
    <interactant intactId="EBI-354921">
        <id>P11021</id>
    </interactant>
    <interactant intactId="EBI-20894690">
        <id>P49184</id>
        <label>DNASE1L1</label>
    </interactant>
    <organismsDiffer>false</organismsDiffer>
    <experiments>3</experiments>
</comment>
<comment type="interaction">
    <interactant intactId="EBI-354921">
        <id>P11021</id>
    </interactant>
    <interactant intactId="EBI-1751995">
        <id>Q92874</id>
        <label>DNASE1L2</label>
    </interactant>
    <organismsDiffer>false</organismsDiffer>
    <experiments>3</experiments>
</comment>
<comment type="interaction">
    <interactant intactId="EBI-354921">
        <id>P11021</id>
    </interactant>
    <interactant intactId="EBI-766076">
        <id>Q9NZJ5</id>
        <label>EIF2AK3</label>
    </interactant>
    <organismsDiffer>false</organismsDiffer>
    <experiments>4</experiments>
</comment>
<comment type="interaction">
    <interactant intactId="EBI-354921">
        <id>P11021</id>
    </interactant>
    <interactant intactId="EBI-641062">
        <id>P04626</id>
        <label>ERBB2</label>
    </interactant>
    <organismsDiffer>false</organismsDiffer>
    <experiments>3</experiments>
</comment>
<comment type="interaction">
    <interactant intactId="EBI-354921">
        <id>P11021</id>
    </interactant>
    <interactant intactId="EBI-371750">
        <id>O75460</id>
        <label>ERN1</label>
    </interactant>
    <organismsDiffer>false</organismsDiffer>
    <experiments>3</experiments>
</comment>
<comment type="interaction">
    <interactant intactId="EBI-354921">
        <id>P11021</id>
    </interactant>
    <interactant intactId="EBI-15600828">
        <id>O75460-1</id>
        <label>ERN1</label>
    </interactant>
    <organismsDiffer>false</organismsDiffer>
    <experiments>4</experiments>
</comment>
<comment type="interaction">
    <interactant intactId="EBI-354921">
        <id>P11021</id>
    </interactant>
    <interactant intactId="EBI-401755">
        <id>P62993</id>
        <label>GRB2</label>
    </interactant>
    <organismsDiffer>false</organismsDiffer>
    <experiments>4</experiments>
</comment>
<comment type="interaction">
    <interactant intactId="EBI-354921">
        <id>P11021</id>
    </interactant>
    <interactant intactId="EBI-712457">
        <id>Q15486</id>
        <label>GUSBP1</label>
    </interactant>
    <organismsDiffer>false</organismsDiffer>
    <experiments>3</experiments>
</comment>
<comment type="interaction">
    <interactant intactId="EBI-354921">
        <id>P11021</id>
    </interactant>
    <interactant intactId="EBI-359129">
        <id>P14625</id>
        <label>HSP90B1</label>
    </interactant>
    <organismsDiffer>false</organismsDiffer>
    <experiments>2</experiments>
</comment>
<comment type="interaction">
    <interactant intactId="EBI-354921">
        <id>P11021</id>
    </interactant>
    <interactant intactId="EBI-1054186">
        <id>Q9Y4L1</id>
        <label>HYOU1</label>
    </interactant>
    <organismsDiffer>false</organismsDiffer>
    <experiments>3</experiments>
</comment>
<comment type="interaction">
    <interactant intactId="EBI-354921">
        <id>P11021</id>
    </interactant>
    <interactant intactId="EBI-54607224">
        <id>P01721</id>
        <label>IGLV6-57</label>
    </interactant>
    <organismsDiffer>false</organismsDiffer>
    <experiments>3</experiments>
</comment>
<comment type="interaction">
    <interactant intactId="EBI-354921">
        <id>P11021</id>
    </interactant>
    <interactant intactId="EBI-12382527">
        <id>O95868</id>
        <label>LY6G6D</label>
    </interactant>
    <organismsDiffer>false</organismsDiffer>
    <experiments>2</experiments>
</comment>
<comment type="interaction">
    <interactant intactId="EBI-354921">
        <id>P11021</id>
    </interactant>
    <interactant intactId="EBI-7101695">
        <id>Q9Y328</id>
        <label>NSG2</label>
    </interactant>
    <organismsDiffer>false</organismsDiffer>
    <experiments>2</experiments>
</comment>
<comment type="interaction">
    <interactant intactId="EBI-354921">
        <id>P11021</id>
    </interactant>
    <interactant intactId="EBI-595869">
        <id>Q96IZ0</id>
        <label>PAWR</label>
    </interactant>
    <organismsDiffer>false</organismsDiffer>
    <experiments>8</experiments>
</comment>
<comment type="interaction">
    <interactant intactId="EBI-354921">
        <id>P11021</id>
    </interactant>
    <interactant intactId="EBI-1043087">
        <id>Q15084</id>
        <label>PDIA6</label>
    </interactant>
    <organismsDiffer>false</organismsDiffer>
    <experiments>2</experiments>
</comment>
<comment type="interaction">
    <interactant intactId="EBI-354921">
        <id>P11021</id>
    </interactant>
    <interactant intactId="EBI-365996">
        <id>P04049</id>
        <label>RAF1</label>
    </interactant>
    <organismsDiffer>false</organismsDiffer>
    <experiments>5</experiments>
</comment>
<comment type="interaction">
    <interactant intactId="EBI-354921">
        <id>P11021</id>
    </interactant>
    <interactant intactId="EBI-358919">
        <id>P61619</id>
        <label>SEC61A1</label>
    </interactant>
    <organismsDiffer>false</organismsDiffer>
    <experiments>3</experiments>
</comment>
<comment type="interaction">
    <interactant intactId="EBI-354921">
        <id>P11021</id>
    </interactant>
    <interactant intactId="EBI-2932733">
        <id>P36955</id>
        <label>SERPINF1</label>
    </interactant>
    <organismsDiffer>false</organismsDiffer>
    <experiments>3</experiments>
</comment>
<comment type="interaction">
    <interactant intactId="EBI-354921">
        <id>P11021</id>
    </interactant>
    <interactant intactId="EBI-2840325">
        <id>Q9H173</id>
        <label>SIL1</label>
    </interactant>
    <organismsDiffer>false</organismsDiffer>
    <experiments>10</experiments>
</comment>
<comment type="interaction">
    <interactant intactId="EBI-354921">
        <id>P11021</id>
    </interactant>
    <interactant intactId="EBI-13292283">
        <id>Q9UHI5</id>
        <label>SLC7A8</label>
    </interactant>
    <organismsDiffer>false</organismsDiffer>
    <experiments>3</experiments>
</comment>
<comment type="interaction">
    <interactant intactId="EBI-354921">
        <id>P11021</id>
    </interactant>
    <interactant intactId="EBI-632715">
        <id>Q13573</id>
        <label>SNW1</label>
    </interactant>
    <organismsDiffer>false</organismsDiffer>
    <experiments>5</experiments>
</comment>
<comment type="interaction">
    <interactant intactId="EBI-354921">
        <id>P11021</id>
    </interactant>
    <interactant intactId="EBI-53990332">
        <id>Q6URK8</id>
        <label>SPMIP8</label>
    </interactant>
    <organismsDiffer>false</organismsDiffer>
    <experiments>2</experiments>
</comment>
<comment type="interaction">
    <interactant intactId="EBI-354921">
        <id>P11021</id>
    </interactant>
    <interactant intactId="EBI-8656864">
        <id>Q6PF05</id>
        <label>TTC23L</label>
    </interactant>
    <organismsDiffer>false</organismsDiffer>
    <experiments>3</experiments>
</comment>
<comment type="interaction">
    <interactant intactId="EBI-354921">
        <id>P11021</id>
    </interactant>
    <interactant intactId="EBI-1050671">
        <id>Q13404</id>
        <label>UBE2V1</label>
    </interactant>
    <organismsDiffer>false</organismsDiffer>
    <experiments>3</experiments>
</comment>
<comment type="interaction">
    <interactant intactId="EBI-354921">
        <id>P11021</id>
    </interactant>
    <interactant intactId="EBI-1054215">
        <id>Q9NYU1</id>
        <label>UGGT2</label>
    </interactant>
    <organismsDiffer>false</organismsDiffer>
    <experiments>2</experiments>
</comment>
<comment type="interaction">
    <interactant intactId="EBI-354921">
        <id>P11021</id>
    </interactant>
    <interactant intactId="EBI-3905552">
        <id>P09544</id>
        <label>WNT2</label>
    </interactant>
    <organismsDiffer>false</organismsDiffer>
    <experiments>2</experiments>
</comment>
<comment type="interaction">
    <interactant intactId="EBI-354921">
        <id>P11021</id>
    </interactant>
    <interactant intactId="EBI-7888150">
        <id>Q6T424</id>
    </interactant>
    <organismsDiffer>false</organismsDiffer>
    <experiments>3</experiments>
</comment>
<comment type="interaction">
    <interactant intactId="EBI-354921">
        <id>P11021</id>
    </interactant>
    <interactant intactId="EBI-8321111">
        <id>Q9QXT0</id>
        <label>Cnpy2</label>
    </interactant>
    <organismsDiffer>true</organismsDiffer>
    <experiments>2</experiments>
</comment>
<comment type="interaction">
    <interactant intactId="EBI-354921">
        <id>P11021</id>
    </interactant>
    <interactant intactId="EBI-8381770">
        <id>Q91YW3</id>
        <label>Dnajc3</label>
    </interactant>
    <organismsDiffer>true</organismsDiffer>
    <experiments>2</experiments>
</comment>
<comment type="interaction">
    <interactant intactId="EBI-354921">
        <id>P11021</id>
    </interactant>
    <interactant intactId="EBI-1226344">
        <id>Q9Z2B5</id>
        <label>Eif2ak3</label>
    </interactant>
    <organismsDiffer>true</organismsDiffer>
    <experiments>2</experiments>
</comment>
<comment type="interaction">
    <interactant intactId="EBI-354921">
        <id>P11021</id>
    </interactant>
    <interactant intactId="EBI-1187240">
        <id>Q62627</id>
        <label>Pawr</label>
    </interactant>
    <organismsDiffer>true</organismsDiffer>
    <experiments>4</experiments>
</comment>
<comment type="interaction">
    <interactant intactId="EBI-354921">
        <id>P11021</id>
    </interactant>
    <interactant intactId="EBI-16040613">
        <id>K0BRG7</id>
        <label>S</label>
    </interactant>
    <organismsDiffer>true</organismsDiffer>
    <experiments>9</experiments>
</comment>
<comment type="interaction">
    <interactant intactId="EBI-354921">
        <id>P11021</id>
    </interactant>
    <interactant intactId="EBI-25474821">
        <id>P0DTC2</id>
        <label>S</label>
    </interactant>
    <organismsDiffer>true</organismsDiffer>
    <experiments>8</experiments>
</comment>
<comment type="subcellular location">
    <subcellularLocation>
        <location evidence="18 19 27 37">Endoplasmic reticulum lumen</location>
    </subcellularLocation>
    <subcellularLocation>
        <location evidence="10">Melanosome</location>
    </subcellularLocation>
    <subcellularLocation>
        <location evidence="4">Cytoplasm</location>
    </subcellularLocation>
    <subcellularLocation>
        <location evidence="12 17 28 34 35 40">Cell surface</location>
    </subcellularLocation>
    <text evidence="10 17 28 34">Identified by mass spectrometry in melanosome fractions from stage I to stage IV (PubMed:12643545). Localizes to the cell surface of epithelial cells in response to high levels of free iron (PubMed:20484814, PubMed:24355926, PubMed:27159390).</text>
</comment>
<comment type="induction">
    <text evidence="17 19 34 39 41">By endoplasmic reticulum stress (PubMed:21289099, PubMed:36739529). Induced in nasal epithelial cells by high free iron levels (PubMed:20484814, PubMed:27159390, PubMed:32487760). Induced in nasal epithelial cells in high glucose (PubMed:20484814, PubMed:27159390, PubMed:32487760). Induced in nasal epithelial cells by 3-hydroxybutyric acid (BHB) (PubMed:27159390, PubMed:32487760).</text>
</comment>
<comment type="domain">
    <text evidence="1">The interdomain linker regulates the chaperone activity by mediating the formation of homooligomers. Homooligomers are formed by engagement of the interdomain linker of one HSPA5/BiP molecule as a typical substrate of an adjacent HSPA5/BiP molecule. HSPA5/BiP oligomerization inactivates participating HSPA5/BiP protomers. HSPA5/BiP oligomers probably act as reservoirs to store HSPA5/BiP molecules when they are not needed by the cell. When the levels of unfolded proteins rise, cells can rapidly break up these oligomers to make active monomers.</text>
</comment>
<comment type="PTM">
    <text evidence="1 29">AMPylated by FICD (PubMed:25601083). In unstressed cells, AMPylation at Thr-518 by FICD inactivates the chaperome activity: AMPylated form is locked in a relatively inert state and only weakly stimulated by J domain-containing proteins (By similarity). In response to endoplasmic reticulum stress, de-AMPylation by the same protein, FICD, restores the chaperone activity (By similarity).</text>
</comment>
<comment type="disease">
    <text evidence="7">Autoantigen in rheumatoid arthritis.</text>
</comment>
<comment type="biotechnology">
    <text evidence="17">Antibodies against the protein protects endothelial cells from invasion by the fungus R.delemar, a causative agent of mucormycosis, and could thus potentially be used to treat mucormycosis disease (PubMed:20484814). Antibodies against the protein also protect a diabetic ketoacidosis mouse model against mucormycosis (PubMed:20484814).</text>
</comment>
<comment type="similarity">
    <text evidence="48">Belongs to the heat shock protein 70 family.</text>
</comment>
<comment type="caution">
    <text evidence="1 29">AMPylation was initially reported to take place at Ser-365 and Thr-366 in vitro, and promote activation of HSPA5/BiP (PubMed:25601083). However, it was later shown that AMPylation takes place at Thr-518 and leads to inactivation of HSPA5/BiP.</text>
</comment>
<comment type="online information" name="Atlas of Genetics and Cytogenetics in Oncology and Haematology">
    <link uri="https://atlasgeneticsoncology.org/gene/40876/HSPA5"/>
</comment>
<reference key="1">
    <citation type="journal article" date="1988" name="DNA">
        <title>Human gene encoding the 78,000-dalton glucose-regulated protein and its pseudogene: structure, conservation, and regulation.</title>
        <authorList>
            <person name="Ting J."/>
            <person name="Lee A.S."/>
        </authorList>
    </citation>
    <scope>NUCLEOTIDE SEQUENCE [GENOMIC DNA]</scope>
</reference>
<reference key="2">
    <citation type="submission" date="1995-12" db="EMBL/GenBank/DDBJ databases">
        <authorList>
            <person name="Chao C.C.K."/>
        </authorList>
    </citation>
    <scope>NUCLEOTIDE SEQUENCE [MRNA]</scope>
    <source>
        <tissue>Cervix carcinoma</tissue>
    </source>
</reference>
<reference key="3">
    <citation type="submission" date="2000-01" db="EMBL/GenBank/DDBJ databases">
        <title>Grp78 is involved in the quality control of the LDL-receptor.</title>
        <authorList>
            <person name="Hansen J.J."/>
            <person name="Nielsen M.N."/>
            <person name="Jorgensen M.M."/>
            <person name="Gregersen N."/>
            <person name="Bolund L."/>
        </authorList>
    </citation>
    <scope>NUCLEOTIDE SEQUENCE [MRNA]</scope>
    <source>
        <tissue>Fibroblast</tissue>
    </source>
</reference>
<reference key="4">
    <citation type="submission" date="1999-12" db="EMBL/GenBank/DDBJ databases">
        <title>Sequence differences between human grp78/BiP isolated from HeLa cells and previously reported human sequences.</title>
        <authorList>
            <person name="Bermudez-Fajardo A."/>
            <person name="Llewellyn D.H."/>
            <person name="Campbell A.K."/>
            <person name="Errington R.R."/>
        </authorList>
    </citation>
    <scope>NUCLEOTIDE SEQUENCE [MRNA]</scope>
</reference>
<reference key="5">
    <citation type="submission" date="2006-01" db="EMBL/GenBank/DDBJ databases">
        <authorList>
            <consortium name="NIEHS SNPs program"/>
        </authorList>
    </citation>
    <scope>NUCLEOTIDE SEQUENCE [GENOMIC DNA]</scope>
    <scope>VARIANT HIS-543</scope>
</reference>
<reference key="6">
    <citation type="journal article" date="2004" name="Nature">
        <title>DNA sequence and analysis of human chromosome 9.</title>
        <authorList>
            <person name="Humphray S.J."/>
            <person name="Oliver K."/>
            <person name="Hunt A.R."/>
            <person name="Plumb R.W."/>
            <person name="Loveland J.E."/>
            <person name="Howe K.L."/>
            <person name="Andrews T.D."/>
            <person name="Searle S."/>
            <person name="Hunt S.E."/>
            <person name="Scott C.E."/>
            <person name="Jones M.C."/>
            <person name="Ainscough R."/>
            <person name="Almeida J.P."/>
            <person name="Ambrose K.D."/>
            <person name="Ashwell R.I.S."/>
            <person name="Babbage A.K."/>
            <person name="Babbage S."/>
            <person name="Bagguley C.L."/>
            <person name="Bailey J."/>
            <person name="Banerjee R."/>
            <person name="Barker D.J."/>
            <person name="Barlow K.F."/>
            <person name="Bates K."/>
            <person name="Beasley H."/>
            <person name="Beasley O."/>
            <person name="Bird C.P."/>
            <person name="Bray-Allen S."/>
            <person name="Brown A.J."/>
            <person name="Brown J.Y."/>
            <person name="Burford D."/>
            <person name="Burrill W."/>
            <person name="Burton J."/>
            <person name="Carder C."/>
            <person name="Carter N.P."/>
            <person name="Chapman J.C."/>
            <person name="Chen Y."/>
            <person name="Clarke G."/>
            <person name="Clark S.Y."/>
            <person name="Clee C.M."/>
            <person name="Clegg S."/>
            <person name="Collier R.E."/>
            <person name="Corby N."/>
            <person name="Crosier M."/>
            <person name="Cummings A.T."/>
            <person name="Davies J."/>
            <person name="Dhami P."/>
            <person name="Dunn M."/>
            <person name="Dutta I."/>
            <person name="Dyer L.W."/>
            <person name="Earthrowl M.E."/>
            <person name="Faulkner L."/>
            <person name="Fleming C.J."/>
            <person name="Frankish A."/>
            <person name="Frankland J.A."/>
            <person name="French L."/>
            <person name="Fricker D.G."/>
            <person name="Garner P."/>
            <person name="Garnett J."/>
            <person name="Ghori J."/>
            <person name="Gilbert J.G.R."/>
            <person name="Glison C."/>
            <person name="Grafham D.V."/>
            <person name="Gribble S."/>
            <person name="Griffiths C."/>
            <person name="Griffiths-Jones S."/>
            <person name="Grocock R."/>
            <person name="Guy J."/>
            <person name="Hall R.E."/>
            <person name="Hammond S."/>
            <person name="Harley J.L."/>
            <person name="Harrison E.S.I."/>
            <person name="Hart E.A."/>
            <person name="Heath P.D."/>
            <person name="Henderson C.D."/>
            <person name="Hopkins B.L."/>
            <person name="Howard P.J."/>
            <person name="Howden P.J."/>
            <person name="Huckle E."/>
            <person name="Johnson C."/>
            <person name="Johnson D."/>
            <person name="Joy A.A."/>
            <person name="Kay M."/>
            <person name="Keenan S."/>
            <person name="Kershaw J.K."/>
            <person name="Kimberley A.M."/>
            <person name="King A."/>
            <person name="Knights A."/>
            <person name="Laird G.K."/>
            <person name="Langford C."/>
            <person name="Lawlor S."/>
            <person name="Leongamornlert D.A."/>
            <person name="Leversha M."/>
            <person name="Lloyd C."/>
            <person name="Lloyd D.M."/>
            <person name="Lovell J."/>
            <person name="Martin S."/>
            <person name="Mashreghi-Mohammadi M."/>
            <person name="Matthews L."/>
            <person name="McLaren S."/>
            <person name="McLay K.E."/>
            <person name="McMurray A."/>
            <person name="Milne S."/>
            <person name="Nickerson T."/>
            <person name="Nisbett J."/>
            <person name="Nordsiek G."/>
            <person name="Pearce A.V."/>
            <person name="Peck A.I."/>
            <person name="Porter K.M."/>
            <person name="Pandian R."/>
            <person name="Pelan S."/>
            <person name="Phillimore B."/>
            <person name="Povey S."/>
            <person name="Ramsey Y."/>
            <person name="Rand V."/>
            <person name="Scharfe M."/>
            <person name="Sehra H.K."/>
            <person name="Shownkeen R."/>
            <person name="Sims S.K."/>
            <person name="Skuce C.D."/>
            <person name="Smith M."/>
            <person name="Steward C.A."/>
            <person name="Swarbreck D."/>
            <person name="Sycamore N."/>
            <person name="Tester J."/>
            <person name="Thorpe A."/>
            <person name="Tracey A."/>
            <person name="Tromans A."/>
            <person name="Thomas D.W."/>
            <person name="Wall M."/>
            <person name="Wallis J.M."/>
            <person name="West A.P."/>
            <person name="Whitehead S.L."/>
            <person name="Willey D.L."/>
            <person name="Williams S.A."/>
            <person name="Wilming L."/>
            <person name="Wray P.W."/>
            <person name="Young L."/>
            <person name="Ashurst J.L."/>
            <person name="Coulson A."/>
            <person name="Blocker H."/>
            <person name="Durbin R.M."/>
            <person name="Sulston J.E."/>
            <person name="Hubbard T."/>
            <person name="Jackson M.J."/>
            <person name="Bentley D.R."/>
            <person name="Beck S."/>
            <person name="Rogers J."/>
            <person name="Dunham I."/>
        </authorList>
    </citation>
    <scope>NUCLEOTIDE SEQUENCE [LARGE SCALE GENOMIC DNA]</scope>
</reference>
<reference key="7">
    <citation type="submission" date="2005-07" db="EMBL/GenBank/DDBJ databases">
        <authorList>
            <person name="Mural R.J."/>
            <person name="Istrail S."/>
            <person name="Sutton G.G."/>
            <person name="Florea L."/>
            <person name="Halpern A.L."/>
            <person name="Mobarry C.M."/>
            <person name="Lippert R."/>
            <person name="Walenz B."/>
            <person name="Shatkay H."/>
            <person name="Dew I."/>
            <person name="Miller J.R."/>
            <person name="Flanigan M.J."/>
            <person name="Edwards N.J."/>
            <person name="Bolanos R."/>
            <person name="Fasulo D."/>
            <person name="Halldorsson B.V."/>
            <person name="Hannenhalli S."/>
            <person name="Turner R."/>
            <person name="Yooseph S."/>
            <person name="Lu F."/>
            <person name="Nusskern D.R."/>
            <person name="Shue B.C."/>
            <person name="Zheng X.H."/>
            <person name="Zhong F."/>
            <person name="Delcher A.L."/>
            <person name="Huson D.H."/>
            <person name="Kravitz S.A."/>
            <person name="Mouchard L."/>
            <person name="Reinert K."/>
            <person name="Remington K.A."/>
            <person name="Clark A.G."/>
            <person name="Waterman M.S."/>
            <person name="Eichler E.E."/>
            <person name="Adams M.D."/>
            <person name="Hunkapiller M.W."/>
            <person name="Myers E.W."/>
            <person name="Venter J.C."/>
        </authorList>
    </citation>
    <scope>NUCLEOTIDE SEQUENCE [LARGE SCALE GENOMIC DNA]</scope>
</reference>
<reference key="8">
    <citation type="journal article" date="2004" name="Genome Res.">
        <title>The status, quality, and expansion of the NIH full-length cDNA project: the Mammalian Gene Collection (MGC).</title>
        <authorList>
            <consortium name="The MGC Project Team"/>
        </authorList>
    </citation>
    <scope>NUCLEOTIDE SEQUENCE [LARGE SCALE MRNA]</scope>
    <source>
        <tissue>Muscle</tissue>
    </source>
</reference>
<reference key="9">
    <citation type="journal article" date="1992" name="Nucleic Acids Res.">
        <title>A direct-repeat sequence of the human BiP gene is required for A23187-mediated inducibility and an inducible nuclear factor binding.</title>
        <authorList>
            <person name="Chao C.C.K."/>
            <person name="Lin-Chao S."/>
        </authorList>
    </citation>
    <scope>NUCLEOTIDE SEQUENCE [GENOMIC DNA] OF 1-25</scope>
</reference>
<reference key="10">
    <citation type="journal article" date="2001" name="J. Immunol.">
        <title>The human endoplasmic reticulum molecular chaperone BiP is an autoantigen for rheumatoid arthritis and prevents the induction of experimental arthritis.</title>
        <authorList>
            <person name="Corrigall V.M."/>
            <person name="Bodman-Smith M.D."/>
            <person name="Fife M.S."/>
            <person name="Canas B."/>
            <person name="Myers L.K."/>
            <person name="Wooley P."/>
            <person name="Soh C."/>
            <person name="Staines N.A."/>
            <person name="Pappin D.J.C."/>
            <person name="Berlo S.E."/>
            <person name="van Eden W."/>
            <person name="van Der Zee R."/>
            <person name="Lanchbury J.S."/>
            <person name="Panayi G.S."/>
        </authorList>
    </citation>
    <scope>NUCLEOTIDE SEQUENCE [MRNA] OF 20-650</scope>
    <scope>DISEASE</scope>
    <source>
        <tissue>Articular cartilage</tissue>
    </source>
</reference>
<reference key="11">
    <citation type="journal article" date="1997" name="Electrophoresis">
        <title>Two-dimensional electrophoretic analysis of human breast carcinoma proteins: mapping of proteins that bind to the SH3 domain of mixed lineage kinase MLK2.</title>
        <authorList>
            <person name="Rasmussen R.K."/>
            <person name="Ji H."/>
            <person name="Eddes J.S."/>
            <person name="Moritz R.L."/>
            <person name="Reid G.E."/>
            <person name="Simpson R.J."/>
            <person name="Dorow D.S."/>
        </authorList>
    </citation>
    <scope>PROTEIN SEQUENCE OF 22-38</scope>
    <source>
        <tissue>Mammary carcinoma</tissue>
    </source>
</reference>
<reference key="12">
    <citation type="journal article" date="1990" name="Endocrinology">
        <title>Heat shock proteins bind calcitonin.</title>
        <authorList>
            <person name="Dana R.C."/>
            <person name="Welch W.J."/>
            <person name="Deftos L.J."/>
        </authorList>
    </citation>
    <scope>PROTEIN SEQUENCE OF 19-39</scope>
    <scope>FUNCTION</scope>
</reference>
<reference key="13">
    <citation type="journal article" date="1997" name="Electrophoresis">
        <title>A two-dimensional gel database of human colon carcinoma proteins.</title>
        <authorList>
            <person name="Ji H."/>
            <person name="Reid G.E."/>
            <person name="Moritz R.L."/>
            <person name="Eddes J.S."/>
            <person name="Burgess A.W."/>
            <person name="Simpson R.J."/>
        </authorList>
    </citation>
    <scope>PROTEIN SEQUENCE OF 19-40</scope>
    <source>
        <tissue>Colon carcinoma</tissue>
    </source>
</reference>
<reference key="14">
    <citation type="submission" date="2008-12" db="UniProtKB">
        <authorList>
            <person name="Lubec G."/>
            <person name="Vishwanath V."/>
            <person name="Chen W.-Q."/>
            <person name="Sun Y."/>
        </authorList>
    </citation>
    <scope>PROTEIN SEQUENCE OF 61-74; 82-96; 102-113; 124-152; 164-181; 186-214; 307-336; 353-367; 448-464; 475-492; 563-573; 602-617 AND 622-654</scope>
    <scope>IDENTIFICATION BY MASS SPECTROMETRY</scope>
    <source>
        <tissue>Brain</tissue>
        <tissue>Cajal-Retzius cell</tissue>
        <tissue>Fetal brain cortex</tissue>
    </source>
</reference>
<reference key="15">
    <citation type="journal article" date="1992" name="Mol. Biol. Cell">
        <title>Analysis in vivo of GRP78-BiP/substrate interactions and their role in induction of the GRP78-BiP gene.</title>
        <authorList>
            <person name="Ng D.T."/>
            <person name="Watowich S.S."/>
            <person name="Lamb R.A."/>
        </authorList>
    </citation>
    <scope>FUNCTION</scope>
</reference>
<reference key="16">
    <citation type="journal article" date="2002" name="J. Biol. Chem.">
        <title>Dimerization and release of molecular chaperone inhibition facilitate activation of eukaryotic initiation factor-2 kinase in response to endoplasmic reticulum stress.</title>
        <authorList>
            <person name="Ma K."/>
            <person name="Vattem K.M."/>
            <person name="Wek R.C."/>
        </authorList>
    </citation>
    <scope>FUNCTION</scope>
    <scope>INTERACTION WITH EIF2AK3</scope>
</reference>
<reference key="17">
    <citation type="journal article" date="2010" name="Sci. Signal.">
        <title>Quantitative phosphoproteomics reveals widespread full phosphorylation site occupancy during mitosis.</title>
        <authorList>
            <person name="Olsen J.V."/>
            <person name="Vermeulen M."/>
            <person name="Santamaria A."/>
            <person name="Kumar C."/>
            <person name="Miller M.L."/>
            <person name="Jensen L.J."/>
            <person name="Gnad F."/>
            <person name="Cox J."/>
            <person name="Jensen T.S."/>
            <person name="Nigg E.A."/>
            <person name="Brunak S."/>
            <person name="Mann M."/>
        </authorList>
    </citation>
    <scope>PHOSPHORYLATION [LARGE SCALE ANALYSIS] AT THR-518</scope>
    <scope>IDENTIFICATION BY MASS SPECTROMETRY [LARGE SCALE ANALYSIS]</scope>
    <source>
        <tissue>Cervix carcinoma</tissue>
    </source>
</reference>
<reference key="18">
    <citation type="journal article" date="2011" name="BMC Syst. Biol.">
        <title>Initial characterization of the human central proteome.</title>
        <authorList>
            <person name="Burkard T.R."/>
            <person name="Planyavsky M."/>
            <person name="Kaupe I."/>
            <person name="Breitwieser F.P."/>
            <person name="Buerckstuemmer T."/>
            <person name="Bennett K.L."/>
            <person name="Superti-Furga G."/>
            <person name="Colinge J."/>
        </authorList>
    </citation>
    <scope>IDENTIFICATION BY MASS SPECTROMETRY [LARGE SCALE ANALYSIS]</scope>
</reference>
<reference key="19">
    <citation type="journal article" date="2011" name="Mol. Biol. Cell">
        <title>Protective role of Gipie, a Girdin family protein, in endoplasmic reticulum stress responses in endothelial cells.</title>
        <authorList>
            <person name="Matsushita E."/>
            <person name="Asai N."/>
            <person name="Enomoto A."/>
            <person name="Kawamoto Y."/>
            <person name="Kato T."/>
            <person name="Mii S."/>
            <person name="Maeda K."/>
            <person name="Shibata R."/>
            <person name="Hattori S."/>
            <person name="Hagikura M."/>
            <person name="Takahashi K."/>
            <person name="Sokabe M."/>
            <person name="Murakumo Y."/>
            <person name="Murohara T."/>
            <person name="Takahashi M."/>
        </authorList>
    </citation>
    <scope>INTERACTION WITH CCDC88B</scope>
    <scope>SUBCELLULAR LOCATION</scope>
    <scope>INDUCTION BY ER STRESS</scope>
</reference>
<reference key="20">
    <citation type="journal article" date="2013" name="PLoS Genet.">
        <title>A newly uncovered group of distantly related lysine methyltransferases preferentially interact with molecular chaperones to regulate their activity.</title>
        <authorList>
            <person name="Cloutier P."/>
            <person name="Lavallee-Adam M."/>
            <person name="Faubert D."/>
            <person name="Blanchette M."/>
            <person name="Coulombe B."/>
        </authorList>
    </citation>
    <scope>PROTEIN SEQUENCE OF 582-596</scope>
    <scope>INTERACTION WITH METTL23</scope>
    <scope>METHYLATION AT LYS-585</scope>
    <scope>MUTAGENESIS OF LYS-585</scope>
    <scope>IDENTIFICATION BY MASS SPECTROMETRY</scope>
</reference>
<reference key="21">
    <citation type="journal article" date="2002" name="Mol. Biol. Cell">
        <title>A subset of chaperones and folding enzymes form multiprotein complexes in endoplasmic reticulum to bind nascent proteins.</title>
        <authorList>
            <person name="Meunier L."/>
            <person name="Usherwood Y.-K."/>
            <person name="Chung K.T."/>
            <person name="Hendershot L.M."/>
        </authorList>
    </citation>
    <scope>COMPONENT OF A CHAPERONE COMPLEX</scope>
</reference>
<reference key="22">
    <citation type="journal article" date="2003" name="Clin. Exp. Immunol.">
        <title>Association of stress proteins with autoantigens: a possible mechanism for triggering autoimmunity?</title>
        <authorList>
            <person name="Purcell A.W."/>
            <person name="Todd A."/>
            <person name="Kinoshita G."/>
            <person name="Lynch T.A."/>
            <person name="Keech C.L."/>
            <person name="Gething M.J."/>
            <person name="Gordon T.P."/>
        </authorList>
    </citation>
    <scope>INTERACTION WITH TRIM21</scope>
</reference>
<reference key="23">
    <citation type="journal article" date="2003" name="J. Biol. Chem.">
        <title>ERdj5, an endoplasmic reticulum (ER)-resident protein containing DnaJ and thioredoxin domains, is expressed in secretory cells or following ER stress.</title>
        <authorList>
            <person name="Cunnea P.M."/>
            <person name="Miranda-Vizuete A."/>
            <person name="Bertoli G."/>
            <person name="Simmen T."/>
            <person name="Damdimopoulos A.E."/>
            <person name="Hermann S."/>
            <person name="Leinonen S."/>
            <person name="Huikko M.P."/>
            <person name="Gustafsson J.-A."/>
            <person name="Sitia R."/>
            <person name="Spyrou G."/>
        </authorList>
    </citation>
    <scope>INTERACTION WITH DNAJC10</scope>
</reference>
<reference key="24">
    <citation type="journal article" date="2003" name="J. Proteome Res.">
        <title>Proteomic analysis of early melanosomes: identification of novel melanosomal proteins.</title>
        <authorList>
            <person name="Basrur V."/>
            <person name="Yang F."/>
            <person name="Kushimoto T."/>
            <person name="Higashimoto Y."/>
            <person name="Yasumoto K."/>
            <person name="Valencia J."/>
            <person name="Muller J."/>
            <person name="Vieira W.D."/>
            <person name="Watabe H."/>
            <person name="Shabanowitz J."/>
            <person name="Hearing V.J."/>
            <person name="Hunt D.F."/>
            <person name="Appella E."/>
        </authorList>
    </citation>
    <scope>SUBCELLULAR LOCATION [LARGE SCALE ANALYSIS]</scope>
    <source>
        <tissue>Melanoma</tissue>
    </source>
</reference>
<reference key="25">
    <citation type="journal article" date="2004" name="Arch. Virol.">
        <title>Identification of GRP 78 (BiP) as a liver cell expressed receptor element for dengue virus serotype 2.</title>
        <authorList>
            <person name="Jindadamrongwech S."/>
            <person name="Thepparit C."/>
            <person name="Smith D.R."/>
        </authorList>
    </citation>
    <scope>FUNCTION (MICROBIAL INFECTION)</scope>
    <scope>SUBCELLULAR LOCATION</scope>
</reference>
<reference key="26">
    <citation type="journal article" date="2008" name="Exp. Cell Res.">
        <title>Novel interactions of CLN3 protein link Batten disease to dysregulation of fodrin-Na+, K+ ATPase complex.</title>
        <authorList>
            <person name="Uusi-Rauva K."/>
            <person name="Luiro K."/>
            <person name="Tanhuanpaeae K."/>
            <person name="Kopra O."/>
            <person name="Martin-Vasallo P."/>
            <person name="Kyttaelae A."/>
            <person name="Jalanko A."/>
        </authorList>
    </citation>
    <scope>INTERACTION WITH CLN3</scope>
</reference>
<reference key="27">
    <citation type="journal article" date="2006" name="J. Proteome Res.">
        <title>Proteomic and bioinformatic characterization of the biogenesis and function of melanosomes.</title>
        <authorList>
            <person name="Chi A."/>
            <person name="Valencia J.C."/>
            <person name="Hu Z.-Z."/>
            <person name="Watabe H."/>
            <person name="Yamaguchi H."/>
            <person name="Mangini N.J."/>
            <person name="Huang H."/>
            <person name="Canfield V.A."/>
            <person name="Cheng K.C."/>
            <person name="Yang F."/>
            <person name="Abe R."/>
            <person name="Yamagishi S."/>
            <person name="Shabanowitz J."/>
            <person name="Hearing V.J."/>
            <person name="Wu C."/>
            <person name="Appella E."/>
            <person name="Hunt D.F."/>
        </authorList>
    </citation>
    <scope>SUBCELLULAR LOCATION [LARGE SCALE ANALYSIS]</scope>
    <source>
        <tissue>Melanoma</tissue>
    </source>
</reference>
<reference key="28">
    <citation type="journal article" date="2008" name="J. Biol. Chem.">
        <title>Human XTP3-B forms an endoplasmic reticulum quality control scaffold with the HRD1-SEL1L ubiquitin ligase complex and BiP.</title>
        <authorList>
            <person name="Hosokawa N."/>
            <person name="Wada I."/>
            <person name="Nagasawa K."/>
            <person name="Moriyama T."/>
            <person name="Okawa K."/>
            <person name="Nagata K."/>
        </authorList>
    </citation>
    <scope>INTERACTION WITH ERLEC1; OS9; SEL1L AND SYVN1</scope>
</reference>
<reference key="29">
    <citation type="journal article" date="2008" name="Nat. Cell Biol.">
        <title>OS-9 and GRP94 deliver mutant alpha1-antitrypsin to the Hrd1-SEL1L ubiquitin ligase complex for ERAD.</title>
        <authorList>
            <person name="Christianson J.C."/>
            <person name="Shaler T.A."/>
            <person name="Tyler R.E."/>
            <person name="Kopito R.R."/>
        </authorList>
    </citation>
    <scope>INTERACTION WITH ERLEC1; OS9; SEL1L AND SYVN1</scope>
</reference>
<reference key="30">
    <citation type="journal article" date="2009" name="Exp. Cell Res.">
        <title>Activation of mammalian IRE1alpha upon ER stress depends on dissociation of BiP rather than on direct interaction with unfolded proteins.</title>
        <authorList>
            <person name="Oikawa D."/>
            <person name="Kimata Y."/>
            <person name="Kohno K."/>
            <person name="Iwawaki T."/>
        </authorList>
    </citation>
    <scope>FUNCTION</scope>
</reference>
<reference key="31">
    <citation type="journal article" date="2010" name="J. Clin. Invest.">
        <title>The endothelial cell receptor GRP78 is required for mucormycosis pathogenesis in diabetic mice.</title>
        <authorList>
            <person name="Liu M."/>
            <person name="Spellberg B."/>
            <person name="Phan Q.T."/>
            <person name="Fu Y."/>
            <person name="Fu Y."/>
            <person name="Lee A.S."/>
            <person name="Edwards J.E. Jr."/>
            <person name="Filler S.G."/>
            <person name="Ibrahim A.S."/>
        </authorList>
    </citation>
    <scope>FUNCTION (MICROBIAL INFECTION)</scope>
    <scope>SUBCELLULAR LOCATION</scope>
    <scope>INDUCTION</scope>
    <scope>BIOTECHNOLOGY</scope>
</reference>
<reference key="32">
    <citation type="journal article" date="2011" name="Mol. Cell. Biochem.">
        <title>The precursor to the germ cell-specific PCSK4 proteinase is inefficiently activated in transfected somatic cells: evidence of interaction with the BiP chaperone.</title>
        <authorList>
            <person name="Gyamera-Acheampong C."/>
            <person name="Sirois F."/>
            <person name="Denis N.J."/>
            <person name="Mishra P."/>
            <person name="Figeys D."/>
            <person name="Basak A."/>
            <person name="Mbikay M."/>
        </authorList>
    </citation>
    <scope>INTERACTION WITH PCSK4</scope>
    <scope>SUBCELLULAR LOCATION</scope>
</reference>
<reference key="33">
    <citation type="journal article" date="2012" name="J. Biol. Chem.">
        <title>Mesencephalic astrocyte-derived neurotrophic factor protects the heart from ischemic damage and is selectively secreted upon sarco/endoplasmic reticulum calcium depletion.</title>
        <authorList>
            <person name="Glembotski C.C."/>
            <person name="Thuerauf D.J."/>
            <person name="Huang C."/>
            <person name="Vekich J.A."/>
            <person name="Gottlieb R.A."/>
            <person name="Doroudgar S."/>
        </authorList>
    </citation>
    <scope>INTERACTION WITH MANF</scope>
</reference>
<reference key="34">
    <citation type="journal article" date="2012" name="J. Proteome Res.">
        <title>Resveratrol-induced changes of the human adipocyte secretion profile.</title>
        <authorList>
            <person name="Rosenow A."/>
            <person name="Noben J.P."/>
            <person name="Jocken J."/>
            <person name="Kallendrusch S."/>
            <person name="Fischer-Posovszky P."/>
            <person name="Mariman E.C."/>
            <person name="Renes J."/>
        </authorList>
    </citation>
    <scope>IDENTIFICATION BY MASS SPECTROMETRY [LARGE SCALE ANALYSIS]</scope>
</reference>
<reference key="35">
    <citation type="journal article" date="2013" name="J. Biol. Chem.">
        <title>Identification and characterization of a novel human methyltransferase modulating Hsp70 function through lysine methylation.</title>
        <authorList>
            <person name="Jakobsson M.E."/>
            <person name="Moen A."/>
            <person name="Bousset L."/>
            <person name="Egge-Jacobsen W."/>
            <person name="Kernstock S."/>
            <person name="Melki R."/>
            <person name="Falnes P.O."/>
        </authorList>
    </citation>
    <scope>METHYLATION AT LYS-585</scope>
    <scope>MUTAGENESIS OF LYS-585</scope>
</reference>
<reference key="36">
    <citation type="journal article" date="2013" name="J. Natl. Cancer Inst.">
        <title>Unraveling the role of KIAA1199, a novel endoplasmic reticulum protein, in cancer cell migration.</title>
        <authorList>
            <person name="Evensen N.A."/>
            <person name="Kuscu C."/>
            <person name="Nguyen H.L."/>
            <person name="Zarrabi K."/>
            <person name="Dufour A."/>
            <person name="Kadam P."/>
            <person name="Hu Y.J."/>
            <person name="Pulkoski-Gross A."/>
            <person name="Bahou W.F."/>
            <person name="Zucker S."/>
            <person name="Cao J."/>
        </authorList>
    </citation>
    <scope>FUNCTION</scope>
    <scope>INTERACTION WITH CEMIP</scope>
    <scope>SUBCELLULAR LOCATION</scope>
</reference>
<reference key="37">
    <citation type="journal article" date="2013" name="Mol. Cell">
        <title>ERdj5 is the ER reductase that catalyzes the removal of non-native disulfides and correct folding of the LDL receptor.</title>
        <authorList>
            <person name="Oka O.B."/>
            <person name="Pringle M.A."/>
            <person name="Schopp I.M."/>
            <person name="Braakman I."/>
            <person name="Bulleid N.J."/>
        </authorList>
    </citation>
    <scope>FUNCTION</scope>
    <scope>INTERACTION WITH DNAJC10</scope>
</reference>
<reference key="38">
    <citation type="journal article" date="2013" name="Oncogene">
        <title>GRP78 regulates clusterin stability, retrotranslocation and mitochondrial localization under ER stress in prostate cancer.</title>
        <authorList>
            <person name="Li N."/>
            <person name="Zoubeidi A."/>
            <person name="Beraldi E."/>
            <person name="Gleave M.E."/>
        </authorList>
    </citation>
    <scope>INTERACTION WITH CLU</scope>
    <scope>SUBCELLULAR LOCATION</scope>
    <scope>FUNCTION</scope>
</reference>
<reference key="39">
    <citation type="journal article" date="2014" name="J. Clin. Invest.">
        <title>CotH3 mediates fungal invasion of host cells during mucormycosis.</title>
        <authorList>
            <person name="Gebremariam T."/>
            <person name="Liu M."/>
            <person name="Luo G."/>
            <person name="Bruno V."/>
            <person name="Phan Q.T."/>
            <person name="Waring A.J."/>
            <person name="Edwards J.E. Jr."/>
            <person name="Filler S.G."/>
            <person name="Yeaman M.R."/>
            <person name="Ibrahim A.S."/>
        </authorList>
    </citation>
    <scope>FUNCTION (MICROBIAL INFECTION)</scope>
    <scope>INTERACTION WITH R.DELEMAR COTH2 AND COTH3 (MICROBIAL INFECTION)</scope>
    <scope>SUBCELLULAR LOCATION</scope>
</reference>
<reference key="40">
    <citation type="journal article" date="2014" name="J. Proteomics">
        <title>An enzyme assisted RP-RPLC approach for in-depth analysis of human liver phosphoproteome.</title>
        <authorList>
            <person name="Bian Y."/>
            <person name="Song C."/>
            <person name="Cheng K."/>
            <person name="Dong M."/>
            <person name="Wang F."/>
            <person name="Huang J."/>
            <person name="Sun D."/>
            <person name="Wang L."/>
            <person name="Ye M."/>
            <person name="Zou H."/>
        </authorList>
    </citation>
    <scope>PHOSPHORYLATION [LARGE SCALE ANALYSIS] AT THR-518</scope>
    <scope>IDENTIFICATION BY MASS SPECTROMETRY [LARGE SCALE ANALYSIS]</scope>
    <source>
        <tissue>Liver</tissue>
    </source>
</reference>
<reference key="41">
    <citation type="journal article" date="2014" name="Mol. Cell. Proteomics">
        <title>Immunoaffinity enrichment and mass spectrometry analysis of protein methylation.</title>
        <authorList>
            <person name="Guo A."/>
            <person name="Gu H."/>
            <person name="Zhou J."/>
            <person name="Mulhern D."/>
            <person name="Wang Y."/>
            <person name="Lee K.A."/>
            <person name="Yang V."/>
            <person name="Aguiar M."/>
            <person name="Kornhauser J."/>
            <person name="Jia X."/>
            <person name="Ren J."/>
            <person name="Beausoleil S.A."/>
            <person name="Silva J.C."/>
            <person name="Vemulapalli V."/>
            <person name="Bedford M.T."/>
            <person name="Comb M.J."/>
        </authorList>
    </citation>
    <scope>METHYLATION [LARGE SCALE ANALYSIS] AT LYS-585 AND LYS-591</scope>
    <scope>IDENTIFICATION BY MASS SPECTROMETRY [LARGE SCALE ANALYSIS]</scope>
    <source>
        <tissue>Colon carcinoma</tissue>
    </source>
</reference>
<reference key="42">
    <citation type="journal article" date="2014" name="Nat. Struct. Mol. Biol.">
        <title>Uncovering global SUMOylation signaling networks in a site-specific manner.</title>
        <authorList>
            <person name="Hendriks I.A."/>
            <person name="D'Souza R.C."/>
            <person name="Yang B."/>
            <person name="Verlaan-de Vries M."/>
            <person name="Mann M."/>
            <person name="Vertegaal A.C."/>
        </authorList>
    </citation>
    <scope>SUMOYLATION [LARGE SCALE ANALYSIS] AT LYS-352</scope>
    <scope>IDENTIFICATION BY MASS SPECTROMETRY [LARGE SCALE ANALYSIS]</scope>
</reference>
<reference key="43">
    <citation type="journal article" date="2014" name="Proc. Natl. Acad. Sci. U.S.A.">
        <title>Mapping of SUMO sites and analysis of SUMOylation changes induced by external stimuli.</title>
        <authorList>
            <person name="Impens F."/>
            <person name="Radoshevich L."/>
            <person name="Cossart P."/>
            <person name="Ribet D."/>
        </authorList>
    </citation>
    <scope>SUMOYLATION [LARGE SCALE ANALYSIS] AT LYS-352 AND LYS-353</scope>
    <scope>IDENTIFICATION BY MASS SPECTROMETRY [LARGE SCALE ANALYSIS]</scope>
</reference>
<reference key="44">
    <citation type="journal article" date="2015" name="Cancer Res.">
        <title>KIAA1324 Suppresses Gastric Cancer Progression by Inhibiting the Oncoprotein GRP78.</title>
        <authorList>
            <person name="Kang J.M."/>
            <person name="Park S."/>
            <person name="Kim S.J."/>
            <person name="Kim H."/>
            <person name="Lee B."/>
            <person name="Kim J."/>
            <person name="Park J."/>
            <person name="Kim S.T."/>
            <person name="Yang H.K."/>
            <person name="Kim W.H."/>
            <person name="Kim S.J."/>
        </authorList>
    </citation>
    <scope>FUNCTION</scope>
    <scope>INTERACTION WITH CASP7 AND ELAPOR1</scope>
    <scope>REGION</scope>
</reference>
<reference key="45">
    <citation type="journal article" date="2015" name="J. Biol. Chem.">
        <title>A novel link between Fic (filamentation induced by cAMP)-mediated adenylylation/AMPylation and the unfolded protein response.</title>
        <authorList>
            <person name="Sanyal A."/>
            <person name="Chen A.J."/>
            <person name="Nakayasu E.S."/>
            <person name="Lazar C.S."/>
            <person name="Zbornik E.A."/>
            <person name="Worby C.A."/>
            <person name="Koller A."/>
            <person name="Mattoo S."/>
        </authorList>
    </citation>
    <scope>AMPYLATION</scope>
</reference>
<reference key="46">
    <citation type="journal article" date="2015" name="Mol. Cell. Proteomics">
        <title>System-wide analysis of SUMOylation dynamics in response to replication stress reveals novel small ubiquitin-like modified target proteins and acceptor lysines relevant for genome stability.</title>
        <authorList>
            <person name="Xiao Z."/>
            <person name="Chang J.G."/>
            <person name="Hendriks I.A."/>
            <person name="Sigurdsson J.O."/>
            <person name="Olsen J.V."/>
            <person name="Vertegaal A.C."/>
        </authorList>
    </citation>
    <scope>SUMOYLATION [LARGE SCALE ANALYSIS] AT LYS-352</scope>
    <scope>IDENTIFICATION BY MASS SPECTROMETRY [LARGE SCALE ANALYSIS]</scope>
</reference>
<reference key="47">
    <citation type="journal article" date="2015" name="Proteomics">
        <title>N-terminome analysis of the human mitochondrial proteome.</title>
        <authorList>
            <person name="Vaca Jacome A.S."/>
            <person name="Rabilloud T."/>
            <person name="Schaeffer-Reiss C."/>
            <person name="Rompais M."/>
            <person name="Ayoub D."/>
            <person name="Lane L."/>
            <person name="Bairoch A."/>
            <person name="Van Dorsselaer A."/>
            <person name="Carapito C."/>
        </authorList>
    </citation>
    <scope>IDENTIFICATION BY MASS SPECTROMETRY [LARGE SCALE ANALYSIS]</scope>
</reference>
<reference key="48">
    <citation type="journal article" date="2016" name="Biochem. Biophys. Res. Commun.">
        <title>Versatile function of the circadian protein CIPC as a regulator of Erk activation.</title>
        <authorList>
            <person name="Matsunaga R."/>
            <person name="Nishino T."/>
            <person name="Yokoyama A."/>
            <person name="Nakashima A."/>
            <person name="Kikkawa U."/>
            <person name="Konishi H."/>
        </authorList>
    </citation>
    <scope>INTERACTION WITH CIPC</scope>
</reference>
<reference key="49">
    <citation type="journal article" date="2016" name="Genes Cells">
        <title>Glucose-regulated protein 78 (GRP78) binds directly to PIP3 phosphatase SKIP and determines its localization.</title>
        <authorList>
            <person name="Ijuin T."/>
            <person name="Hatano N."/>
            <person name="Takenawa T."/>
        </authorList>
    </citation>
    <scope>INTERACTION WITH INPP5K</scope>
</reference>
<reference key="50">
    <citation type="journal article" date="2016" name="J. Clin. Invest.">
        <title>Bicarbonate correction of ketoacidosis alters host-pathogen interactions and alleviates mucormycosis.</title>
        <authorList>
            <person name="Gebremariam T."/>
            <person name="Lin L."/>
            <person name="Liu M."/>
            <person name="Kontoyiannis D.P."/>
            <person name="French S."/>
            <person name="Edwards J.E. Jr."/>
            <person name="Filler S.G."/>
            <person name="Ibrahim A.S."/>
        </authorList>
    </citation>
    <scope>SUBCELLULAR LOCATION</scope>
    <scope>INDUCTION</scope>
</reference>
<reference key="51">
    <citation type="journal article" date="2017" name="Gene">
        <title>HSPA5 Gene encoding Hsp70 chaperone BiP in the endoplasmic reticulum.</title>
        <authorList>
            <person name="Wang J."/>
            <person name="Lee J."/>
            <person name="Liem D."/>
            <person name="Ping P."/>
        </authorList>
    </citation>
    <scope>REVIEW</scope>
</reference>
<reference key="52">
    <citation type="journal article" date="2017" name="Nat. Struct. Mol. Biol.">
        <title>Site-specific mapping of the human SUMO proteome reveals co-modification with phosphorylation.</title>
        <authorList>
            <person name="Hendriks I.A."/>
            <person name="Lyon D."/>
            <person name="Young C."/>
            <person name="Jensen L.J."/>
            <person name="Vertegaal A.C."/>
            <person name="Nielsen M.L."/>
        </authorList>
    </citation>
    <scope>SUMOYLATION [LARGE SCALE ANALYSIS] AT LYS-352</scope>
    <scope>IDENTIFICATION BY MASS SPECTROMETRY [LARGE SCALE ANALYSIS]</scope>
</reference>
<reference key="53">
    <citation type="journal article" date="2017" name="Sci. Rep.">
        <title>LOXL2 drives epithelial-mesenchymal transition via activation of IRE1-XBP1 signalling pathway.</title>
        <authorList>
            <person name="Cuevas E.P."/>
            <person name="Eraso P."/>
            <person name="Mazon M.J."/>
            <person name="Santos V."/>
            <person name="Moreno-Bueno G."/>
            <person name="Cano A."/>
            <person name="Portillo F."/>
        </authorList>
    </citation>
    <scope>FUNCTION</scope>
    <scope>INTERACTION WITH LOXL2</scope>
    <scope>IDENTIFICATION BY MASS SPECTROMETRY</scope>
</reference>
<reference key="54">
    <citation type="journal article" date="2017" name="J. Virol.">
        <title>GRP78 Is an Important Host Factor for Japanese Encephalitis Virus Entry and Replication in Mammalian Cells.</title>
        <authorList>
            <person name="Nain M."/>
            <person name="Mukherjee S."/>
            <person name="Karmakar S.P."/>
            <person name="Paton A.W."/>
            <person name="Paton J.C."/>
            <person name="Abdin M.Z."/>
            <person name="Basu A."/>
            <person name="Kalia M."/>
            <person name="Vrati S."/>
        </authorList>
    </citation>
    <scope>FUNCTION (MICROBIAL INFECTION)</scope>
    <scope>INTERACTION WITH JAPANESE ENCEPHALITIS VIRUS ENVELOPE PROTEIN E (MICROBIAL INFECTION)</scope>
    <scope>SUBCELLULAR LOCATION</scope>
</reference>
<reference key="55">
    <citation type="journal article" date="2018" name="Cell Rep.">
        <title>Chaperone-Mediated Sec61 Channel Gating during ER Import of Small Precursor Proteins Overcomes Sec61 Inhibitor-Reinforced Energy Barrier.</title>
        <authorList>
            <person name="Hassdenteufel S."/>
            <person name="Johnson N."/>
            <person name="Paton A.W."/>
            <person name="Paton J.C."/>
            <person name="High S."/>
            <person name="Zimmermann R."/>
        </authorList>
    </citation>
    <scope>FUNCTION</scope>
</reference>
<reference key="56">
    <citation type="journal article" date="2018" name="Nat. Commun.">
        <title>Conserved roles of C. elegans and human MANFs in sulfatide binding and cytoprotection.</title>
        <authorList>
            <person name="Bai M."/>
            <person name="Vozdek R."/>
            <person name="Hnizda A."/>
            <person name="Jiang C."/>
            <person name="Wang B."/>
            <person name="Kuchar L."/>
            <person name="Li T."/>
            <person name="Zhang Y."/>
            <person name="Wood C."/>
            <person name="Feng L."/>
            <person name="Dang Y."/>
            <person name="Ma D.K."/>
        </authorList>
    </citation>
    <scope>SUBCELLULAR LOCATION</scope>
</reference>
<reference key="57">
    <citation type="journal article" date="2020" name="MBio">
        <title>GRP78 and Integrins Play Different Roles in Host Cell Invasion during Mucormycosis.</title>
        <authorList>
            <person name="Alqarihi A."/>
            <person name="Gebremariam T."/>
            <person name="Gu Y."/>
            <person name="Swidergall M."/>
            <person name="Alkhazraji S."/>
            <person name="Soliman S.S.M."/>
            <person name="Bruno V.M."/>
            <person name="Edwards J.E. Jr."/>
            <person name="Filler S.G."/>
            <person name="Uppuluri P."/>
            <person name="Ibrahim A.S."/>
        </authorList>
    </citation>
    <scope>FUNCTION (MICROBIAL INFECTION)</scope>
    <scope>INTERACTION WITH R.DELEMAR COTH3 (MICROBIAL INFECTION)</scope>
    <scope>INDUCTION</scope>
</reference>
<reference key="58">
    <citation type="journal article" date="2021" name="Sci. Rep.">
        <title>A functional interaction between GRP78 and Zika virus E protein.</title>
        <authorList>
            <person name="Khongwichit S."/>
            <person name="Sornjai W."/>
            <person name="Jitobaom K."/>
            <person name="Greenwood M."/>
            <person name="Greenwood M.P."/>
            <person name="Hitakarun A."/>
            <person name="Wikan N."/>
            <person name="Murphy D."/>
            <person name="Smith D.R."/>
        </authorList>
    </citation>
    <scope>FUNCTION (MICROBIAL INFECTION)</scope>
    <scope>INTERACTION WITH ZIKA VIRUS ENVELOPE PROTEIN E (MICROBIAL INFECTION)</scope>
    <scope>SUBCELLULAR LOCATION</scope>
</reference>
<reference key="59">
    <citation type="journal article" date="2023" name="Cell Rep.">
        <title>MANF regulates neuronal survival and UPR through its ER-located receptor IRE1alpha.</title>
        <authorList>
            <person name="Kovaleva V."/>
            <person name="Yu L.Y."/>
            <person name="Ivanova L."/>
            <person name="Shpironok O."/>
            <person name="Nam J."/>
            <person name="Eesmaa A."/>
            <person name="Kumpula E.P."/>
            <person name="Sakson S."/>
            <person name="Toots U."/>
            <person name="Ustav M."/>
            <person name="Huiskonen J.T."/>
            <person name="Voutilainen M.H."/>
            <person name="Lindholm P."/>
            <person name="Karelson M."/>
            <person name="Saarma M."/>
        </authorList>
    </citation>
    <scope>FUNCTION</scope>
    <scope>INTERACTION WITH ERN1 AND EIF2AK3</scope>
    <scope>INDUCTION</scope>
</reference>
<reference key="60">
    <citation type="journal article" date="2024" name="Sci. Rep.">
        <title>The interaction of GRP78 and Zika virus E and NS1 proteins occurs in a chaperone-client manner.</title>
        <authorList>
            <person name="Sornjai W."/>
            <person name="Promma P."/>
            <person name="Priewkhiew S."/>
            <person name="Ramphan S."/>
            <person name="Jaratsittisin J."/>
            <person name="Jinagool P."/>
            <person name="Wikan N."/>
            <person name="Greenwood M."/>
            <person name="Murphy D."/>
            <person name="Smith D.R."/>
        </authorList>
    </citation>
    <scope>INTERACTION WITH ZIKA VIRUS ENVELOPE PROTEIN E (MICROBIAL INFECTION)</scope>
    <scope>INTERACTION WITH ZIKA VIRUS NON-STRUCTURAL PROTEIN 1 (MICROBIAL INFECTION)</scope>
    <scope>MUTAGENESIS OF ARG-492 AND THR-518</scope>
</reference>
<reference key="61">
    <citation type="journal article" date="2010" name="PLoS ONE">
        <title>Crystal structures of the ATPase domains of four human Hsp70 isoforms: HSPA1L/Hsp70-hom, HSPA2/Hsp70-2, HSPA6/Hsp70B', and HSPA5/BiP/GRP78.</title>
        <authorList>
            <person name="Wisniewska M."/>
            <person name="Karlberg T."/>
            <person name="Lehtio L."/>
            <person name="Johansson I."/>
            <person name="Kotenyova T."/>
            <person name="Moche M."/>
            <person name="Schuler H."/>
        </authorList>
    </citation>
    <scope>X-RAY CRYSTALLOGRAPHY (2.40 ANGSTROMS) OF 26-410</scope>
</reference>
<reference key="62">
    <citation type="journal article" date="2011" name="J. Med. Chem.">
        <title>Adenosine-derived inhibitors of 78 kDa glucose regulated protein (Grp78) ATPase: insights into isoform selectivity.</title>
        <authorList>
            <person name="Macias A.T."/>
            <person name="Williamson D.S."/>
            <person name="Allen N."/>
            <person name="Borgognoni J."/>
            <person name="Clay A."/>
            <person name="Daniels Z."/>
            <person name="Dokurno P."/>
            <person name="Drysdale M.J."/>
            <person name="Francis G.L."/>
            <person name="Graham C.J."/>
            <person name="Howes R."/>
            <person name="Matassova N."/>
            <person name="Murray J.B."/>
            <person name="Parsons R."/>
            <person name="Shaw T."/>
            <person name="Surgenor A.E."/>
            <person name="Terry L."/>
            <person name="Wang Y."/>
            <person name="Wood M."/>
            <person name="Massey A.J."/>
        </authorList>
    </citation>
    <scope>X-RAY CRYSTALLOGRAPHY (1.95 ANGSTROMS) OF 26-407 IN COMPLEXES WITH ATP ANALOG</scope>
</reference>
<reference evidence="51 52 53" key="63">
    <citation type="journal article" date="2015" name="Structure">
        <title>Close and allosteric opening of the polypeptide-binding site in a human Hsp70 chaperone BiP.</title>
        <authorList>
            <person name="Yang J."/>
            <person name="Nune M."/>
            <person name="Zong Y."/>
            <person name="Zhou L."/>
            <person name="Liu Q."/>
        </authorList>
    </citation>
    <scope>X-RAY CRYSTALLOGRAPHY (2.57 ANGSTROMS) OF 418-637 IN COMPLEX WITH ATP</scope>
    <scope>CATALYTIC ACTIVITY</scope>
    <scope>ACTIVITY REGULATION</scope>
    <scope>MUTAGENESIS OF THR-229</scope>
</reference>
<name>BIP_HUMAN</name>